<sequence>MEELQDDYEDMMEENLEQEEYEDPDIPESQMEEPAAHDTEATATDYHTTSHPGTHKVYVELQELVMDEKNQELRWMEAARWVQLEENLGENGAWGRPHLSHLTFWSLLELRRVFTKGTVLLDLQETSLAGVANQLLDRFIFEDQIRPQDREELLRALLLKHSHAGELEALGGVKPAVLTRSGDPSQPLLPQHSSLETQLFCEQGDGGTEGHSPSGILEKIPPDSEATLVLVGRADFLEQPVLGFVRLQEAAELEAVELPVPIRFLFVLLGPEAPHIDYTQLGRAAATLMSERVFRIDAYMAQSRGELLHSLEGFLDCSLVLPPTDAPSEQALLSLVPVQRELLRRRYQSSPAKPDSSFYKGLDLNGGPDDPLQQTGQLFGGLVRDIRRRYPYYLSDITDAFSPQVLAAVIFIYFAALSPAITFGGLLGEKTRNQMGVSELLISTAVQGILFALLGAQPLLVVGFSGPLLVFEEAFFSFCETNGLEYIVGRVWIGFWLILLVVLVVAFEGSFLVRFISRYTQEIFSFLISLIFIYETFSKLIKIFQDHPLQKTYNYNVLMVPKPQGPLPNTALLSLVLMAGTFFFAMMLRKFKNSSYFPGKLRRVIGDFGVPISILIMVLVDFFIQDTYTQKLSVPDGFKVSNSSARGWVIHPLGLRSEFPIWMMFASALPALLVFILIFLESQITTLIVSKPERKMVKGSGFHLDLLLVVGMGGVAALFGMPWLSATTVRSVTHANALTVMGKASTPGAAAQIQEVKEQRISGLLVAVLVGLSILMEPILSRIPLAVLFGIFLYMGVTSLSGIQLFDRILLLFKPPKYHPDVPYVKRVKTWRMHLFTGIQIICLAVLWVVKSTPASLALPFVLILTVPLRRVLLPLIFRNVELQCLDADDAKATFDEEEGRDEYDEVAMPV</sequence>
<name>B3AT_HUMAN</name>
<proteinExistence type="evidence at protein level"/>
<protein>
    <recommendedName>
        <fullName evidence="60">Band 3 anion transport protein</fullName>
    </recommendedName>
    <alternativeName>
        <fullName>Anion exchange protein 1</fullName>
        <shortName>AE 1</shortName>
        <shortName>Anion exchanger 1</shortName>
    </alternativeName>
    <alternativeName>
        <fullName>Solute carrier family 4 member 1</fullName>
    </alternativeName>
    <cdAntigenName>CD233</cdAntigenName>
</protein>
<comment type="function">
    <text evidence="8 19 21 24 30 34 38 39">Functions both as a transporter that mediates electroneutral anion exchange across the cell membrane and as a structural protein (PubMed:10926824, PubMed:14734552, PubMed:1538405, PubMed:16227998, PubMed:20151848, PubMed:24121512, PubMed:28387307, PubMed:35835865). Component of the ankyrin-1 complex of the erythrocyte membrane; required for normal flexibility and stability of the erythrocyte membrane and for normal erythrocyte shape via the interactions of its cytoplasmic domain with cytoskeletal proteins, glycolytic enzymes, and hemoglobin (PubMed:1538405, PubMed:20151848, PubMed:35835865). Functions as a transporter that mediates the 1:1 exchange of inorganic anions across the erythrocyte membrane. Mediates chloride-bicarbonate exchange in the kidney, and is required for normal acidification of the urine (PubMed:10926824, PubMed:14734552, PubMed:16227998, PubMed:24121512, PubMed:28387307).</text>
</comment>
<comment type="function">
    <text evidence="16 18">(Microbial infection) Acts as a receptor for P.falciparum (isolate 3D7) MSP9 and thus, facilitates merozoite invasion of erythrocytes (PubMed:14630931). Acts as a receptor for P.falciparum (isolate 3D7) MSP1 and thus, facilitates merozoite invasion of erythrocytes (PubMed:12692305).</text>
</comment>
<comment type="catalytic activity">
    <reaction evidence="8 19 24 34 38">
        <text>hydrogencarbonate(in) + chloride(out) = hydrogencarbonate(out) + chloride(in)</text>
        <dbReference type="Rhea" id="RHEA:72363"/>
        <dbReference type="ChEBI" id="CHEBI:17544"/>
        <dbReference type="ChEBI" id="CHEBI:17996"/>
    </reaction>
</comment>
<comment type="activity regulation">
    <text>Phenyl isothiocyanate inhibits anion transport in vitro.</text>
</comment>
<comment type="subunit">
    <text evidence="11 30 33 38 39 44">A dimer in solution, but in its membrane environment, it exists primarily as a mixture of dimers and tetramers and spans the membrane asymmetrically (PubMed:35835865). Component of the ankyrin-1 complex in the erythrocyte, composed of ANK1, RHCE, RHAG, SLC4A1, EPB42, GYPA, GYPB and AQP1 (PubMed:35835865). Interacts with STOM; this interaction positively regulates SLC4A1 activity (PubMed:23219802, PubMed:28387307). Interacts with GYPA; a GYPA monomer is bound at each end of the SLC4A1 dimer forming a heterotetramer (PubMed:35835865). Three SLC4A1 dimers (Band 3-I, Band 3-II and Band 3-III) participates in the ankyrin-1 complex (PubMed:35835865). Interacts (via the cytoplasmic domain) with EPB42; this interaction is mediated by the SLC4A1 Band 3-I dimer (PubMed:35835865). Interacts (via the cytoplasmic domain) directly with ANK1; this interaction is mediated by the SLC4A1 Band 3-II and Band 3-III dimers (PubMed:35835865, PubMed:7665627).</text>
</comment>
<comment type="subunit">
    <molecule>Isoform 2</molecule>
    <text evidence="35">Interacts with TMEM139 (PubMed:26049106).</text>
</comment>
<comment type="subunit">
    <text evidence="32">(Microbial infection) Interacts (via N-terminus) with P.falciparum (isolate K1) aldolase FBPA; the interaction inhibits FBPA catalytic activity.</text>
</comment>
<comment type="subunit">
    <text evidence="18">(Microbial infection) Interacts (via the 5ABC region) with P.falciparum (isolate 3D7) MSP9/ABRA (via N-terminus).</text>
</comment>
<comment type="subunit">
    <text evidence="16">(Microbial infection) Interacts (via the 5ABC region) with P.falciparum (isolate 3D7) MSP1 p42 subunit.</text>
</comment>
<comment type="interaction">
    <interactant intactId="EBI-7576138">
        <id>P02730</id>
    </interactant>
    <interactant intactId="EBI-10225815">
        <id>Q08AM2</id>
        <label>ADAM33</label>
    </interactant>
    <organismsDiffer>false</organismsDiffer>
    <experiments>3</experiments>
</comment>
<comment type="interaction">
    <interactant intactId="EBI-7576138">
        <id>P02730</id>
    </interactant>
    <interactant intactId="EBI-714630">
        <id>P05026</id>
        <label>ATP1B1</label>
    </interactant>
    <organismsDiffer>false</organismsDiffer>
    <experiments>8</experiments>
</comment>
<comment type="interaction">
    <interactant intactId="EBI-7576138">
        <id>P02730</id>
    </interactant>
    <interactant intactId="EBI-3922513">
        <id>O95393</id>
        <label>BMP10</label>
    </interactant>
    <organismsDiffer>false</organismsDiffer>
    <experiments>3</experiments>
</comment>
<comment type="interaction">
    <interactant intactId="EBI-7576138">
        <id>P02730</id>
    </interactant>
    <interactant intactId="EBI-11579371">
        <id>Q9BXR6</id>
        <label>CFHR5</label>
    </interactant>
    <organismsDiffer>false</organismsDiffer>
    <experiments>3</experiments>
</comment>
<comment type="interaction">
    <interactant intactId="EBI-7576138">
        <id>P02730</id>
    </interactant>
    <interactant intactId="EBI-702665">
        <id>P02724</id>
        <label>GYPA</label>
    </interactant>
    <organismsDiffer>false</organismsDiffer>
    <experiments>5</experiments>
</comment>
<comment type="interaction">
    <interactant intactId="EBI-7576138">
        <id>P02730</id>
    </interactant>
    <interactant intactId="EBI-1211440">
        <id>P27105</id>
        <label>STOM</label>
    </interactant>
    <organismsDiffer>false</organismsDiffer>
    <experiments>14</experiments>
</comment>
<comment type="interaction">
    <interactant intactId="EBI-7576138">
        <id>P02730</id>
    </interactant>
    <interactant intactId="EBI-2852148">
        <id>Q9H2L4</id>
        <label>TMEM60</label>
    </interactant>
    <organismsDiffer>false</organismsDiffer>
    <experiments>3</experiments>
</comment>
<comment type="interaction">
    <interactant intactId="EBI-7576138">
        <id>P02730</id>
    </interactant>
    <interactant intactId="EBI-2750726">
        <id>P46406</id>
        <label>GAPDH</label>
    </interactant>
    <organismsDiffer>true</organismsDiffer>
    <experiments>4</experiments>
</comment>
<comment type="interaction">
    <interactant intactId="EBI-7576138">
        <id>P02730</id>
    </interactant>
    <interactant intactId="EBI-11621504">
        <id>A5K5E5</id>
        <label>PVX_088820</label>
    </interactant>
    <organismsDiffer>true</organismsDiffer>
    <experiments>8</experiments>
</comment>
<comment type="subcellular location">
    <subcellularLocation>
        <location evidence="8 34 36 42">Cell membrane</location>
        <topology evidence="36">Multi-pass membrane protein</topology>
    </subcellularLocation>
    <subcellularLocation>
        <location evidence="42">Basolateral cell membrane</location>
        <topology evidence="42">Multi-pass membrane protein</topology>
    </subcellularLocation>
    <text evidence="42">Detected in the erythrocyte cell membrane and on the basolateral membrane of alpha-intercalated cells in the collecting duct in the kidney.</text>
</comment>
<comment type="alternative products">
    <event type="alternative splicing"/>
    <isoform>
        <id>P02730-1</id>
        <name>1</name>
        <name>eAE1</name>
        <name>Erythrocyte</name>
        <sequence type="displayed"/>
    </isoform>
    <isoform>
        <id>P02730-2</id>
        <name evidence="42">2</name>
        <name>kAE1</name>
        <name>Kidney</name>
        <sequence type="described" ref="VSP_057833"/>
    </isoform>
</comment>
<comment type="tissue specificity">
    <text evidence="8 21 32 33 36 42">Detected in erythrocytes (at protein level).</text>
</comment>
<comment type="tissue specificity">
    <molecule>Isoform 2</molecule>
    <text evidence="42">Expressed in kidney (at protein level).</text>
</comment>
<comment type="PTM">
    <text evidence="9 29">Phosphorylated on Tyr-8 and Tyr-21 most likely by SYK. PP1-resistant phosphorylation that precedes Tyr-359 and Tyr-904 phosphorylation.</text>
</comment>
<comment type="PTM">
    <text evidence="9 29">Phosphorylated on Tyr-359 and Tyr-904 most likely by LYN. PP1-inhibited phosphorylation that follows Tyr-8 and Tyr-21 phosphorylation.</text>
</comment>
<comment type="PTM">
    <text evidence="36">N-glycosylated.</text>
</comment>
<comment type="polymorphism">
    <text>SLC4A1 is responsible for the Diego blood group system [MIM:110500]. The molecular basis of the Di(a)=Di1/Di(b)/Di2 blood group antigens is a single variation in position 854; Leu-854 corresponds to Di(a) and Pro-854 to Di(b). The molecular basis of the Wr(a)=Di3/Wr(b)/Di4 blood group antigens is a single variation in position 658; Lys-658 corresponds to Wr(a) and Glu-658 to Wr(b). The blood group antigens Wd(a)=Di5 (Waldner-type) has Met-557; Rb(a)=Di6 has Leu-548 and WARR=Di7 has Ile-552.</text>
</comment>
<comment type="polymorphism">
    <text>SLC4A1 is responsible for the Swann blood group system (SW) [MIM:601550]. Sw(a+) has a Gln or a Trp at position 646 and Sw(a-) has an Arg.</text>
</comment>
<comment type="polymorphism">
    <text>SLC4A1 is responsible for the Froese blood group system (FR) [MIM:601551]. FR(a+) has a Lys at position 480 and FR(a-) has a Glu.</text>
</comment>
<comment type="polymorphism">
    <text>Genetic variations in SLC4A1 are involved in resistance to malaria [MIM:611162].</text>
</comment>
<comment type="disease" evidence="21 27">
    <disease id="DI-00448">
        <name>Ovalocytosis, Southeast Asian</name>
        <acronym>SAO</acronym>
        <description>An autosomal dominant hematologic disorder characterized by ovalocytic erythrocytes that are rigid and exhibit reduced expression of many erythrocyte antigens. Clinical manifestations include mild hemolysis, intermittent jaundice and gallstones. However, the disorder is most often asymptomatic.</description>
        <dbReference type="MIM" id="166900"/>
    </disease>
    <text>The disease is caused by variants affecting the gene represented in this entry.</text>
</comment>
<comment type="disease" evidence="4 6 10 15 17 23 24 43 49 50 51 52 53 54 58">
    <disease id="DI-02324">
        <name>Spherocytosis 4</name>
        <acronym>SPH4</acronym>
        <description>An autosomal dominant form of spherocytosis, a group of hematologic disorders characterized by the presence of numerous abnormally shaped erythrocytes which are generally spheroidal. Affected individuals have anemia, jaundice, and splenomegaly. Clinical severity is variable. Some individuals are asymptomatic, whereas others have severe hemolytic anemia requiring erythrocyte transfusion.</description>
        <dbReference type="MIM" id="612653"/>
    </disease>
    <text>The disease is caused by variants affecting the gene represented in this entry.</text>
</comment>
<comment type="disease" evidence="8 19 30 55 56">
    <disease id="DI-01207">
        <name>Renal tubular acidosis, distal, 1</name>
        <acronym>DRTA1</acronym>
        <description>An autosomal dominant disease characterized by reduced ability to acidify urine, variable hyperchloremic hypokalemic metabolic acidosis, nephrocalcinosis, and nephrolithiasis. It is due to functional failure of alpha-intercalated cells of the cortical collecting duct of the distal nephron, where vectorial proton transport is required for urinary acidification.</description>
        <dbReference type="MIM" id="179800"/>
    </disease>
    <text>The disease is caused by variants affecting the gene represented in this entry.</text>
</comment>
<comment type="disease" evidence="8 20 30 40 57">
    <disease id="DI-01237">
        <name>Renal tubular acidosis, distal, 4, with hemolytic anemia</name>
        <acronym>DRTA4</acronym>
        <description>An autosomal recessive disease characterized by the association of hemolytic anemia with distal renal tubular acidosis, the reduced ability to acidify urine resulting in variable hyperchloremic hypokalemic metabolic acidosis, nephrocalcinosis, and nephrolithiasis.</description>
        <dbReference type="MIM" id="611590"/>
    </disease>
    <text>The disease is caused by variants affecting the gene represented in this entry.</text>
</comment>
<comment type="disease" evidence="24">
    <disease id="DI-04609">
        <name>Cryohydrocytosis</name>
        <acronym>CHC</acronym>
        <description>An autosomal dominant disorder of red cell membrane permeability characterized by cold-induced changes in cell volume, resulting in cold-sensitive stomatocytosis, and increased erythrocyte osmotic fragility and autohemolysis at 4 degrees Celsius. Patients present with mild to moderate hemolytic anemia, splenomegaly, fatigue, and pseudohyperkalemia due to a potassium leak from the erythrocytes.</description>
        <dbReference type="MIM" id="185020"/>
    </disease>
    <text>The disease is caused by variants affecting distinct genetic loci, including the gene represented in this entry.</text>
</comment>
<comment type="similarity">
    <text evidence="60">Belongs to the anion exchanger (TC 2.A.31) family.</text>
</comment>
<comment type="online information" name="Wikipedia">
    <link uri="https://en.wikipedia.org/wiki/Band_3"/>
    <text>Band 3 entry</text>
</comment>
<comment type="online information" name="Atlas of Genetics and Cytogenetics in Oncology and Haematology">
    <link uri="https://atlasgeneticsoncology.org/gene/42325/SLC4A1"/>
</comment>
<organism>
    <name type="scientific">Homo sapiens</name>
    <name type="common">Human</name>
    <dbReference type="NCBI Taxonomy" id="9606"/>
    <lineage>
        <taxon>Eukaryota</taxon>
        <taxon>Metazoa</taxon>
        <taxon>Chordata</taxon>
        <taxon>Craniata</taxon>
        <taxon>Vertebrata</taxon>
        <taxon>Euteleostomi</taxon>
        <taxon>Mammalia</taxon>
        <taxon>Eutheria</taxon>
        <taxon>Euarchontoglires</taxon>
        <taxon>Primates</taxon>
        <taxon>Haplorrhini</taxon>
        <taxon>Catarrhini</taxon>
        <taxon>Hominidae</taxon>
        <taxon>Homo</taxon>
    </lineage>
</organism>
<accession>P02730</accession>
<accession>G4V2I6</accession>
<accession>P78487</accession>
<accession>Q1ZZ45</accession>
<accession>Q4KKW9</accession>
<accession>Q4VB84</accession>
<accession>Q9UCY7</accession>
<accession>Q9UDJ1</accession>
<feature type="chain" id="PRO_0000079209" description="Band 3 anion transport protein">
    <location>
        <begin position="1"/>
        <end position="911"/>
    </location>
</feature>
<feature type="topological domain" description="Cytoplasmic" evidence="36">
    <location>
        <begin position="1"/>
        <end position="403"/>
    </location>
</feature>
<feature type="transmembrane region" description="Helical; Name=1" evidence="36">
    <location>
        <begin position="404"/>
        <end position="427"/>
    </location>
</feature>
<feature type="topological domain" description="Extracellular" evidence="36">
    <location>
        <begin position="428"/>
        <end position="435"/>
    </location>
</feature>
<feature type="transmembrane region" description="Helical; Name=2" evidence="36">
    <location>
        <begin position="436"/>
        <end position="456"/>
    </location>
</feature>
<feature type="topological domain" description="Cytoplasmic" evidence="36">
    <location>
        <begin position="457"/>
        <end position="459"/>
    </location>
</feature>
<feature type="transmembrane region" description="Discontinuously helical; Name=3" evidence="36">
    <location>
        <begin position="460"/>
        <end position="476"/>
    </location>
</feature>
<feature type="topological domain" description="Extracellular" evidence="36">
    <location>
        <begin position="477"/>
        <end position="485"/>
    </location>
</feature>
<feature type="transmembrane region" description="Helical; Name=4" evidence="36">
    <location>
        <begin position="486"/>
        <end position="506"/>
    </location>
</feature>
<feature type="topological domain" description="Cytoplasmic" evidence="36">
    <location>
        <begin position="507"/>
        <end position="518"/>
    </location>
</feature>
<feature type="transmembrane region" description="Helical; Name=5" evidence="36">
    <location>
        <begin position="519"/>
        <end position="541"/>
    </location>
</feature>
<feature type="topological domain" description="Extracellular" evidence="36">
    <location>
        <begin position="542"/>
        <end position="570"/>
    </location>
</feature>
<feature type="transmembrane region" description="Helical; Name=6" evidence="36">
    <location>
        <begin position="571"/>
        <end position="591"/>
    </location>
</feature>
<feature type="topological domain" description="Cytoplasmic" evidence="36">
    <location>
        <begin position="592"/>
        <end position="602"/>
    </location>
</feature>
<feature type="transmembrane region" description="Helical; Name=7" evidence="36">
    <location>
        <begin position="603"/>
        <end position="623"/>
    </location>
</feature>
<feature type="topological domain" description="Extracellular" evidence="36">
    <location>
        <begin position="624"/>
        <end position="663"/>
    </location>
</feature>
<feature type="transmembrane region" description="Helical; Name=8" evidence="36">
    <location>
        <begin position="664"/>
        <end position="684"/>
    </location>
</feature>
<feature type="topological domain" description="Cytoplasmic" evidence="36">
    <location>
        <begin position="685"/>
        <end position="700"/>
    </location>
</feature>
<feature type="transmembrane region" description="Helical; Name=9" evidence="36">
    <location>
        <begin position="701"/>
        <end position="719"/>
    </location>
</feature>
<feature type="transmembrane region" description="Discontinuously helical; Name=10" evidence="36">
    <location>
        <begin position="720"/>
        <end position="737"/>
    </location>
</feature>
<feature type="topological domain" description="Cytoplasmic" evidence="36">
    <location>
        <begin position="738"/>
        <end position="760"/>
    </location>
</feature>
<feature type="transmembrane region" description="Helical; Name=11" evidence="36">
    <location>
        <begin position="761"/>
        <end position="781"/>
    </location>
</feature>
<feature type="transmembrane region" description="Helical; Name=12" evidence="36">
    <location>
        <begin position="782"/>
        <end position="800"/>
    </location>
</feature>
<feature type="topological domain" description="Cytoplasmic" evidence="36">
    <location>
        <begin position="801"/>
        <end position="838"/>
    </location>
</feature>
<feature type="intramembrane region" description="Discontinuously helical" evidence="36">
    <location>
        <begin position="839"/>
        <end position="869"/>
    </location>
</feature>
<feature type="topological domain" description="Cytoplasmic" evidence="36">
    <location>
        <begin position="870"/>
        <end position="911"/>
    </location>
</feature>
<feature type="region of interest" description="Disordered" evidence="3">
    <location>
        <begin position="1"/>
        <end position="40"/>
    </location>
</feature>
<feature type="region of interest" description="(Microbial infection) Interaction with P.falciparum (isolate K1) FBPA" evidence="32">
    <location>
        <begin position="13"/>
        <end position="31"/>
    </location>
</feature>
<feature type="region of interest" description="Globular">
    <location>
        <begin position="55"/>
        <end position="290"/>
    </location>
</feature>
<feature type="region of interest" description="Interaction with ANK1" evidence="60">
    <location>
        <begin position="176"/>
        <end position="185"/>
    </location>
</feature>
<feature type="region of interest" description="Dimerization arm">
    <location>
        <begin position="304"/>
        <end position="357"/>
    </location>
</feature>
<feature type="region of interest" description="Involved in anion transport">
    <location>
        <begin position="559"/>
        <end position="630"/>
    </location>
</feature>
<feature type="region of interest" description="(Microbial infection) 5ABC region; interaction with P.falciparum (isolate 3D7) MSP9" evidence="18">
    <location>
        <begin position="720"/>
        <end position="761"/>
    </location>
</feature>
<feature type="compositionally biased region" description="Acidic residues" evidence="3">
    <location>
        <begin position="1"/>
        <end position="26"/>
    </location>
</feature>
<feature type="site" description="Important for anion transport">
    <location>
        <position position="590"/>
    </location>
</feature>
<feature type="site" description="Important for anion-proton cotransport">
    <location>
        <position position="681"/>
    </location>
</feature>
<feature type="modified residue" description="N-acetylmethionine" evidence="37 41">
    <location>
        <position position="1"/>
    </location>
</feature>
<feature type="modified residue" description="Phosphotyrosine" evidence="9 29">
    <location>
        <position position="8"/>
    </location>
</feature>
<feature type="modified residue" description="Phosphotyrosine" evidence="9 29">
    <location>
        <position position="21"/>
    </location>
</feature>
<feature type="modified residue" description="Phosphotyrosine" evidence="29">
    <location>
        <position position="46"/>
    </location>
</feature>
<feature type="modified residue" description="Phosphoserine" evidence="2">
    <location>
        <position position="185"/>
    </location>
</feature>
<feature type="modified residue" description="Phosphoserine" evidence="1">
    <location>
        <position position="350"/>
    </location>
</feature>
<feature type="modified residue" description="Phosphotyrosine" evidence="9">
    <location>
        <position position="359"/>
    </location>
</feature>
<feature type="modified residue" description="Phosphotyrosine" evidence="9">
    <location>
        <position position="904"/>
    </location>
</feature>
<feature type="lipid moiety-binding region" description="S-palmitoyl cysteine" evidence="28">
    <location>
        <position position="843"/>
    </location>
</feature>
<feature type="glycosylation site" description="N-linked (GlcNAc...) (complex) asparagine" evidence="7 34 39">
    <location>
        <position position="642"/>
    </location>
</feature>
<feature type="splice variant" id="VSP_057833" description="In isoform 2." evidence="42">
    <location>
        <begin position="1"/>
        <end position="65"/>
    </location>
</feature>
<feature type="sequence variant" id="VAR_058035" evidence="22">
    <original>P</original>
    <variation>H</variation>
    <location>
        <position position="27"/>
    </location>
</feature>
<feature type="sequence variant" id="VAR_014612" description="In dbSNP:rs5035." evidence="6 25 52 59">
    <original>D</original>
    <variation>A</variation>
    <location>
        <position position="38"/>
    </location>
</feature>
<feature type="sequence variant" id="VAR_000798" description="Found in patients with hemolytic anemia; uncertain significance; Montefiore; dbSNP:rs45562031." evidence="48 50">
    <original>E</original>
    <variation>K</variation>
    <location>
        <position position="40"/>
    </location>
</feature>
<feature type="sequence variant" id="VAR_036693" description="In dbSNP:rs34700496.">
    <original>D</original>
    <variation>E</variation>
    <location>
        <position position="45"/>
    </location>
</feature>
<feature type="sequence variant" id="VAR_000799" description="In Di(a)/Memphis-II antigen; dbSNP:rs5036." evidence="6 24 26 27 46 59">
    <original>K</original>
    <variation>E</variation>
    <location>
        <position position="56"/>
    </location>
</feature>
<feature type="sequence variant" id="VAR_039290" description="In dbSNP:rs13306787.">
    <original>E</original>
    <variation>K</variation>
    <location>
        <position position="68"/>
    </location>
</feature>
<feature type="sequence variant" id="VAR_058036" description="In dbSNP:rs13306788." evidence="6">
    <original>E</original>
    <variation>D</variation>
    <location>
        <position position="72"/>
    </location>
</feature>
<feature type="sequence variant" id="VAR_039291" description="In dbSNP:rs781490287." evidence="52">
    <original>L</original>
    <variation>M</variation>
    <location>
        <position position="73"/>
    </location>
</feature>
<feature type="sequence variant" id="VAR_013784" description="In SPH4; Cape Town; dbSNP:rs28929480." evidence="15">
    <original>E</original>
    <variation>K</variation>
    <location>
        <position position="90"/>
    </location>
</feature>
<feature type="sequence variant" id="VAR_014613" description="In dbSNP:rs5037.">
    <original>R</original>
    <variation>S</variation>
    <location>
        <position position="112"/>
    </location>
</feature>
<feature type="sequence variant" id="VAR_013785" description="In SPH4; Fukoka; dbSNP:rs121912749." evidence="6">
    <original>G</original>
    <variation>R</variation>
    <location>
        <position position="130"/>
    </location>
</feature>
<feature type="sequence variant" id="VAR_013786" description="In SPH4; Mondego; dbSNP:rs2047432877." evidence="53">
    <original>P</original>
    <variation>S</variation>
    <location>
        <position position="147"/>
    </location>
</feature>
<feature type="sequence variant" id="VAR_013787" description="In SPH4; Boston." evidence="51">
    <original>A</original>
    <variation>D</variation>
    <location>
        <position position="285"/>
    </location>
</feature>
<feature type="sequence variant" id="VAR_000800" description="In SPH4; Tuscaloosa; dbSNP:rs28931583." evidence="17">
    <original>P</original>
    <variation>R</variation>
    <location>
        <position position="327"/>
    </location>
</feature>
<feature type="sequence variant" id="VAR_000801" description="In SAO and DRTA4; increased rigidity of the erythrocyte membrane leading to increased resistance to shear stress and increased resistance to P.falciparum." evidence="21 27 40">
    <location>
        <begin position="400"/>
        <end position="408"/>
    </location>
</feature>
<feature type="sequence variant" id="VAR_058037" description="In NFLD+ antigen; dbSNP:rs1048804130." evidence="5">
    <original>E</original>
    <variation>D</variation>
    <location>
        <position position="429"/>
    </location>
</feature>
<feature type="sequence variant" id="VAR_013788" description="In ELO antigen; dbSNP:rs373768879.">
    <original>R</original>
    <variation>W</variation>
    <location>
        <position position="432"/>
    </location>
</feature>
<feature type="sequence variant" id="VAR_014614" description="In dbSNP:rs5018.">
    <original>I</original>
    <variation>F</variation>
    <location>
        <position position="442"/>
    </location>
</feature>
<feature type="sequence variant" id="VAR_087559" description="In DRTA4; decreased expression; decreased stability; no effect on dimerization; dbSNP:rs754973425." evidence="40">
    <original>T</original>
    <variation>N</variation>
    <location>
        <position position="444"/>
    </location>
</feature>
<feature type="sequence variant" id="VAR_013789" description="In SPH4; Benesov." evidence="51">
    <original>G</original>
    <variation>E</variation>
    <location>
        <position position="455"/>
    </location>
</feature>
<feature type="sequence variant" id="VAR_058038" description="In SPH4; Yamagata." evidence="6">
    <original>G</original>
    <variation>R</variation>
    <location>
        <position position="455"/>
    </location>
</feature>
<feature type="sequence variant" id="VAR_013790" description="In FR(a+) antigen; dbSNP:rs121912756." evidence="12">
    <original>E</original>
    <variation>K</variation>
    <location>
        <position position="480"/>
    </location>
</feature>
<feature type="sequence variant" id="VAR_013791" description="In SPH4; Coimbra; also in AR-dRTA; dbSNP:rs28931584." evidence="10 53">
    <original>V</original>
    <variation>M</variation>
    <location>
        <position position="488"/>
    </location>
</feature>
<feature type="sequence variant" id="VAR_013792" description="In SPH4; Bicetre I; dbSNP:rs1398477044." evidence="54">
    <original>R</original>
    <variation>C</variation>
    <location>
        <position position="490"/>
    </location>
</feature>
<feature type="sequence variant" id="VAR_058039" description="In SPH4; Pinhal; dbSNP:rs1598299485." evidence="4">
    <original>R</original>
    <variation>H</variation>
    <location>
        <position position="490"/>
    </location>
</feature>
<feature type="sequence variant" id="VAR_025090" description="In dbSNP:rs45568837." evidence="59">
    <original>E</original>
    <variation>K</variation>
    <location>
        <position position="508"/>
    </location>
</feature>
<feature type="sequence variant" id="VAR_000802" description="In SPH4; Dresden; dbSNP:rs868742796." evidence="50">
    <original>R</original>
    <variation>C</variation>
    <location>
        <position position="518"/>
    </location>
</feature>
<feature type="sequence variant" id="VAR_000803" description="In RB(A) antigen; dbSNP:rs879202054.">
    <original>P</original>
    <variation>L</variation>
    <location>
        <position position="548"/>
    </location>
</feature>
<feature type="sequence variant" id="VAR_013793" description="In TR(A) antigen.">
    <original>K</original>
    <variation>N</variation>
    <location>
        <position position="551"/>
    </location>
</feature>
<feature type="sequence variant" id="VAR_000804" description="In WARR antigen.">
    <original>T</original>
    <variation>I</variation>
    <location>
        <position position="552"/>
    </location>
</feature>
<feature type="sequence variant" id="VAR_013794" description="In VG(a) antigen.">
    <original>Y</original>
    <variation>H</variation>
    <location>
        <position position="555"/>
    </location>
</feature>
<feature type="sequence variant" id="VAR_000805" description="In WD(a) antigen; dbSNP:rs121912743.">
    <original>V</original>
    <variation>M</variation>
    <location>
        <position position="557"/>
    </location>
</feature>
<feature type="sequence variant" id="VAR_058040" description="In NFLD+ antigen." evidence="5">
    <original>P</original>
    <variation>A</variation>
    <location>
        <position position="561"/>
    </location>
</feature>
<feature type="sequence variant" id="VAR_013795" description="In BOW antigen." evidence="5">
    <original>P</original>
    <variation>S</variation>
    <location>
        <position position="561"/>
    </location>
</feature>
<feature type="sequence variant" id="VAR_013796" description="In WU antigen; dbSNP:rs551784583.">
    <original>G</original>
    <variation>A</variation>
    <location>
        <position position="565"/>
    </location>
</feature>
<feature type="sequence variant" id="VAR_013797" description="In KREP antigen.">
    <original>P</original>
    <variation>A</variation>
    <location>
        <position position="566"/>
    </location>
</feature>
<feature type="sequence variant" id="VAR_013798" description="In PN(a) antigen; dbSNP:rs1393742050.">
    <original>P</original>
    <variation>S</variation>
    <location>
        <position position="566"/>
    </location>
</feature>
<feature type="sequence variant" id="VAR_013799" description="In BP(a) antigen.">
    <original>N</original>
    <variation>K</variation>
    <location>
        <position position="569"/>
    </location>
</feature>
<feature type="sequence variant" id="VAR_014615" description="In dbSNP:rs5019.">
    <original>M</original>
    <variation>L</variation>
    <location>
        <position position="586"/>
    </location>
</feature>
<feature type="sequence variant" id="VAR_015104" description="In DRTA1; reduced red cell sulfate transport and altered glycosylation of the red cell band 3 N-glycan chain; dbSNP:rs121912745." evidence="55">
    <original>R</original>
    <variation>C</variation>
    <location>
        <position position="589"/>
    </location>
</feature>
<feature type="sequence variant" id="VAR_015105" description="In DRTA1; dbSNP:rs121912744." evidence="55 56">
    <original>R</original>
    <variation>H</variation>
    <location>
        <position position="589"/>
    </location>
</feature>
<feature type="sequence variant" id="VAR_015106" description="In DRTA1; dbSNP:rs121912745." evidence="56">
    <original>R</original>
    <variation>S</variation>
    <location>
        <position position="589"/>
    </location>
</feature>
<feature type="sequence variant" id="VAR_039292" description="In DRTA4; dbSNP:rs121912754." evidence="20">
    <original>R</original>
    <variation>H</variation>
    <location>
        <position position="602"/>
    </location>
</feature>
<feature type="sequence variant" id="VAR_058041" description="In DRTA1; detected subapically and at the apical membrane as well as at the basolateral membrane in contrast to the normal basolateral appearance of wild-type protein; dbSNP:rs878853002." evidence="19">
    <original>G</original>
    <variation>R</variation>
    <location>
        <position position="609"/>
    </location>
</feature>
<feature type="sequence variant" id="VAR_015107" description="In DRTA1; markedly increased red cell sulfate transport but almost normal red cell iodide transport; dbSNP:rs121912746." evidence="55">
    <original>S</original>
    <variation>F</variation>
    <location>
        <position position="613"/>
    </location>
</feature>
<feature type="sequence variant" id="VAR_013800" description="In SW(a+) antigen; dbSNP:rs121912757." evidence="13">
    <original>R</original>
    <variation>Q</variation>
    <location>
        <position position="646"/>
    </location>
</feature>
<feature type="sequence variant" id="VAR_013801" description="In SW(a+) antigen; dbSNP:rs121912758." evidence="13">
    <original>R</original>
    <variation>W</variation>
    <location>
        <position position="646"/>
    </location>
</feature>
<feature type="sequence variant" id="VAR_013802" description="In HG(a) antigen; dbSNP:rs372514760.">
    <original>R</original>
    <variation>C</variation>
    <location>
        <position position="656"/>
    </location>
</feature>
<feature type="sequence variant" id="VAR_013803" description="In MO(a) antigen; dbSNP:rs758868427.">
    <original>R</original>
    <variation>H</variation>
    <location>
        <position position="656"/>
    </location>
</feature>
<feature type="sequence variant" id="VAR_000806" description="In WR(a) antigen; dbSNP:rs75731670." evidence="45">
    <original>E</original>
    <variation>K</variation>
    <location>
        <position position="658"/>
    </location>
</feature>
<feature type="sequence variant" id="VAR_058042" description="In SPH4; Tambau." evidence="23">
    <original>M</original>
    <variation>K</variation>
    <location>
        <position position="663"/>
    </location>
</feature>
<feature type="sequence variant" id="VAR_000807" description="In SPH4; Osnabruck II." evidence="50">
    <location>
        <position position="663"/>
    </location>
</feature>
<feature type="sequence variant" id="VAR_039293" description="In CHC; Blackburn; induces abnormal cations sodium and potassium fluxes; decreases anion chloride transport; dbSNP:rs863225463." evidence="24">
    <original>L</original>
    <variation>P</variation>
    <location>
        <position position="687"/>
    </location>
</feature>
<feature type="sequence variant" id="VAR_014616" description="In dbSNP:rs5022.">
    <original>I</original>
    <variation>V</variation>
    <location>
        <position position="688"/>
    </location>
</feature>
<feature type="sequence variant" id="VAR_014617" description="In dbSNP:rs5023.">
    <original>S</original>
    <variation>G</variation>
    <location>
        <position position="690"/>
    </location>
</feature>
<feature type="sequence variant" id="VAR_015171" description="In DRTA4; also found in a patient with distal renal tubular acidosis and normal red cell morphology; impairs expression at the cell membrane; dbSNP:rs121912748." evidence="8 20 30 57">
    <original>G</original>
    <variation>D</variation>
    <location>
        <position position="701"/>
    </location>
</feature>
<feature type="sequence variant" id="VAR_039294" description="In SPH4; Horam; induces abnormal cations sodium and potassium fluxes; decreases anion chloride transport." evidence="24">
    <original>D</original>
    <variation>Y</variation>
    <location>
        <position position="705"/>
    </location>
</feature>
<feature type="sequence variant" id="VAR_013804" description="In SPH4; Most." evidence="14 51">
    <original>L</original>
    <variation>P</variation>
    <location>
        <position position="707"/>
    </location>
</feature>
<feature type="sequence variant" id="VAR_013805" description="In SPH4; Okinawa." evidence="6">
    <original>G</original>
    <variation>R</variation>
    <location>
        <position position="714"/>
    </location>
</feature>
<feature type="sequence variant" id="VAR_039295" description="In CHC; Hemel; induces abnormal cations sodium and potassium fluxes; decreases anion chloride transport; dbSNP:rs863225461." evidence="24">
    <original>S</original>
    <variation>P</variation>
    <location>
        <position position="731"/>
    </location>
</feature>
<feature type="sequence variant" id="VAR_039296" description="In CHC; Hurstpierpont; induces abnormal cations sodium and potassium fluxes; decreases anion chloride transport; dbSNP:rs863225462." evidence="24">
    <original>H</original>
    <variation>R</variation>
    <location>
        <position position="734"/>
    </location>
</feature>
<feature type="sequence variant" id="VAR_013806" description="In SPH4; Prague II; induces abnormal cations sodium and potassium fluxes; decreases anion chloride transport; dbSNP:rs121912755." evidence="6 14 24 43">
    <original>R</original>
    <variation>Q</variation>
    <location>
        <position position="760"/>
    </location>
</feature>
<feature type="sequence variant" id="VAR_013807" description="In SPH4; Hradec Kralove; dbSNP:rs373916826." evidence="6 14 43">
    <original>R</original>
    <variation>W</variation>
    <location>
        <position position="760"/>
    </location>
</feature>
<feature type="sequence variant" id="VAR_013808" description="In SPH4; Chur; dbSNP:rs121912741." evidence="49">
    <original>G</original>
    <variation>D</variation>
    <location>
        <position position="771"/>
    </location>
</feature>
<feature type="sequence variant" id="VAR_039297" description="In DRTA4; the patient has distal renal tubular acidosis and normal red cell morphology; dbSNP:rs121912753." evidence="20">
    <original>S</original>
    <variation>P</variation>
    <location>
        <position position="773"/>
    </location>
</feature>
<feature type="sequence variant" id="VAR_013809" description="In SPH4; Napoli II." evidence="52">
    <original>I</original>
    <variation>N</variation>
    <location>
        <position position="783"/>
    </location>
</feature>
<feature type="sequence variant" id="VAR_013810" description="In SPH4; Jablonec; dbSNP:rs1167814744." evidence="14 43">
    <original>R</original>
    <variation>C</variation>
    <location>
        <position position="808"/>
    </location>
</feature>
<feature type="sequence variant" id="VAR_013811" description="In SPH4; Nara; dbSNP:rs866727908." evidence="6">
    <original>R</original>
    <variation>H</variation>
    <location>
        <position position="808"/>
    </location>
</feature>
<feature type="sequence variant" id="VAR_014618" description="In dbSNP:rs5025.">
    <original>R</original>
    <variation>H</variation>
    <location>
        <position position="832"/>
    </location>
</feature>
<feature type="sequence variant" id="VAR_013812" description="In SPH4; Birmingham; dbSNP:rs2144596569." evidence="14 51">
    <original>H</original>
    <variation>P</variation>
    <location>
        <position position="834"/>
    </location>
</feature>
<feature type="sequence variant" id="VAR_013813" description="In SPH4; Tokyo; dbSNP:rs121912750." evidence="58">
    <original>T</original>
    <variation>A</variation>
    <location>
        <position position="837"/>
    </location>
</feature>
<feature type="sequence variant" id="VAR_013814" description="In SPH4; Philadelphia; dbSNP:rs2047337144." evidence="6 14 51 54">
    <original>T</original>
    <variation>M</variation>
    <location>
        <position position="837"/>
    </location>
</feature>
<feature type="sequence variant" id="VAR_058043" description="In SPH4; Nagoya." evidence="6">
    <original>T</original>
    <variation>R</variation>
    <location>
        <position position="837"/>
    </location>
</feature>
<feature type="sequence variant" id="VAR_015109" description="In DRTA4; dbSNP:rs121912752." evidence="8">
    <location>
        <position position="850"/>
    </location>
</feature>
<feature type="sequence variant" id="VAR_000808" description="In Di(a)/Memphis-II antigen; dbSNP:rs2285644." evidence="6 46">
    <original>P</original>
    <variation>L</variation>
    <location>
        <position position="854"/>
    </location>
</feature>
<feature type="sequence variant" id="VAR_015108" description="In DRTA1; impairs expression at the cell membrane; dbSNP:rs121912751." evidence="8 30">
    <original>A</original>
    <variation>D</variation>
    <location>
        <position position="858"/>
    </location>
</feature>
<feature type="sequence variant" id="VAR_014619" description="In dbSNP:rs5026." evidence="31 59">
    <original>V</original>
    <variation>I</variation>
    <location>
        <position position="862"/>
    </location>
</feature>
<feature type="sequence variant" id="VAR_013815" description="In acanthocytosis; slightly increases transporter activity; impairs expression at the cell membrane; dbSNP:rs121912759." evidence="34 47">
    <original>P</original>
    <variation>L</variation>
    <location>
        <position position="868"/>
    </location>
</feature>
<feature type="sequence variant" id="VAR_013816" description="In SPH4; Prague III; dbSNP:rs28931585." evidence="14 15 43">
    <original>R</original>
    <variation>W</variation>
    <location>
        <position position="870"/>
    </location>
</feature>
<feature type="mutagenesis site" description="Impairs expression at the cell membrane." evidence="34">
    <original>E</original>
    <variation>A</variation>
    <variation>R</variation>
    <location>
        <position position="85"/>
    </location>
</feature>
<feature type="mutagenesis site" description="Impairs expression at the cell membrane." evidence="34">
    <original>R</original>
    <variation>A</variation>
    <variation>E</variation>
    <variation>S</variation>
    <location>
        <position position="283"/>
    </location>
</feature>
<feature type="mutagenesis site" description="Loss of N-glycosylation site." evidence="34">
    <original>N</original>
    <variation>D</variation>
    <location>
        <position position="642"/>
    </location>
</feature>
<feature type="mutagenesis site" description="Impairs expression at the cell membrane." evidence="34">
    <original>E</original>
    <variation>Q</variation>
    <location>
        <position position="681"/>
    </location>
</feature>
<feature type="sequence conflict" description="In Ref. 9; AA sequence." evidence="60" ref="9">
    <original>M</original>
    <variation>D</variation>
    <location>
        <position position="11"/>
    </location>
</feature>
<feature type="sequence conflict" description="In Ref. 9; AA sequence." evidence="60" ref="9">
    <original>E</original>
    <variation>EE</variation>
    <location>
        <position position="68"/>
    </location>
</feature>
<feature type="sequence conflict" description="In Ref. 3; ABD74692." evidence="60" ref="3">
    <original>Q</original>
    <variation>H</variation>
    <location>
        <position position="759"/>
    </location>
</feature>
<feature type="helix" evidence="79">
    <location>
        <begin position="5"/>
        <end position="7"/>
    </location>
</feature>
<feature type="helix" evidence="79">
    <location>
        <begin position="9"/>
        <end position="16"/>
    </location>
</feature>
<feature type="helix" evidence="79">
    <location>
        <begin position="18"/>
        <end position="21"/>
    </location>
</feature>
<feature type="helix" evidence="80">
    <location>
        <begin position="43"/>
        <end position="46"/>
    </location>
</feature>
<feature type="strand" evidence="75">
    <location>
        <begin position="58"/>
        <end position="66"/>
    </location>
</feature>
<feature type="strand" evidence="75">
    <location>
        <begin position="68"/>
        <end position="70"/>
    </location>
</feature>
<feature type="strand" evidence="75">
    <location>
        <begin position="73"/>
        <end position="88"/>
    </location>
</feature>
<feature type="strand" evidence="75">
    <location>
        <begin position="90"/>
        <end position="92"/>
    </location>
</feature>
<feature type="helix" evidence="75">
    <location>
        <begin position="104"/>
        <end position="115"/>
    </location>
</feature>
<feature type="strand" evidence="75">
    <location>
        <begin position="118"/>
        <end position="123"/>
    </location>
</feature>
<feature type="helix" evidence="75">
    <location>
        <begin position="128"/>
        <end position="141"/>
    </location>
</feature>
<feature type="helix" evidence="75">
    <location>
        <begin position="147"/>
        <end position="149"/>
    </location>
</feature>
<feature type="helix" evidence="75">
    <location>
        <begin position="150"/>
        <end position="157"/>
    </location>
</feature>
<feature type="helix" evidence="75">
    <location>
        <begin position="164"/>
        <end position="169"/>
    </location>
</feature>
<feature type="strand" evidence="80">
    <location>
        <begin position="173"/>
        <end position="175"/>
    </location>
</feature>
<feature type="strand" evidence="80">
    <location>
        <begin position="180"/>
        <end position="185"/>
    </location>
</feature>
<feature type="strand" evidence="75">
    <location>
        <begin position="188"/>
        <end position="190"/>
    </location>
</feature>
<feature type="helix" evidence="75">
    <location>
        <begin position="195"/>
        <end position="200"/>
    </location>
</feature>
<feature type="helix" evidence="74">
    <location>
        <begin position="212"/>
        <end position="219"/>
    </location>
</feature>
<feature type="strand" evidence="75">
    <location>
        <begin position="226"/>
        <end position="234"/>
    </location>
</feature>
<feature type="strand" evidence="75">
    <location>
        <begin position="241"/>
        <end position="251"/>
    </location>
</feature>
<feature type="strand" evidence="74">
    <location>
        <begin position="256"/>
        <end position="258"/>
    </location>
</feature>
<feature type="strand" evidence="75">
    <location>
        <begin position="262"/>
        <end position="270"/>
    </location>
</feature>
<feature type="helix" evidence="75">
    <location>
        <begin position="278"/>
        <end position="290"/>
    </location>
</feature>
<feature type="helix" evidence="75">
    <location>
        <begin position="292"/>
        <end position="300"/>
    </location>
</feature>
<feature type="helix" evidence="75">
    <location>
        <begin position="304"/>
        <end position="316"/>
    </location>
</feature>
<feature type="strand" evidence="75">
    <location>
        <begin position="319"/>
        <end position="321"/>
    </location>
</feature>
<feature type="helix" evidence="75">
    <location>
        <begin position="329"/>
        <end position="332"/>
    </location>
</feature>
<feature type="helix" evidence="75">
    <location>
        <begin position="333"/>
        <end position="335"/>
    </location>
</feature>
<feature type="helix" evidence="75">
    <location>
        <begin position="336"/>
        <end position="347"/>
    </location>
</feature>
<feature type="strand" evidence="80">
    <location>
        <begin position="350"/>
        <end position="352"/>
    </location>
</feature>
<feature type="helix" evidence="78">
    <location>
        <begin position="380"/>
        <end position="389"/>
    </location>
</feature>
<feature type="helix" evidence="78">
    <location>
        <begin position="390"/>
        <end position="392"/>
    </location>
</feature>
<feature type="helix" evidence="78">
    <location>
        <begin position="395"/>
        <end position="398"/>
    </location>
</feature>
<feature type="helix" evidence="78">
    <location>
        <begin position="403"/>
        <end position="431"/>
    </location>
</feature>
<feature type="strand" evidence="82">
    <location>
        <begin position="433"/>
        <end position="435"/>
    </location>
</feature>
<feature type="helix" evidence="78">
    <location>
        <begin position="437"/>
        <end position="454"/>
    </location>
</feature>
<feature type="strand" evidence="81">
    <location>
        <begin position="460"/>
        <end position="463"/>
    </location>
</feature>
<feature type="helix" evidence="78">
    <location>
        <begin position="466"/>
        <end position="481"/>
    </location>
</feature>
<feature type="helix" evidence="78">
    <location>
        <begin position="486"/>
        <end position="506"/>
    </location>
</feature>
<feature type="helix" evidence="78">
    <location>
        <begin position="509"/>
        <end position="515"/>
    </location>
</feature>
<feature type="helix" evidence="78">
    <location>
        <begin position="518"/>
        <end position="546"/>
    </location>
</feature>
<feature type="strand" evidence="78">
    <location>
        <begin position="560"/>
        <end position="562"/>
    </location>
</feature>
<feature type="helix" evidence="78">
    <location>
        <begin position="570"/>
        <end position="593"/>
    </location>
</feature>
<feature type="strand" evidence="77">
    <location>
        <begin position="594"/>
        <end position="597"/>
    </location>
</feature>
<feature type="helix" evidence="78">
    <location>
        <begin position="599"/>
        <end position="607"/>
    </location>
</feature>
<feature type="helix" evidence="78">
    <location>
        <begin position="609"/>
        <end position="622"/>
    </location>
</feature>
<feature type="strand" evidence="78">
    <location>
        <begin position="636"/>
        <end position="638"/>
    </location>
</feature>
<feature type="turn" evidence="78">
    <location>
        <begin position="643"/>
        <end position="645"/>
    </location>
</feature>
<feature type="strand" evidence="78">
    <location>
        <begin position="655"/>
        <end position="657"/>
    </location>
</feature>
<feature type="helix" evidence="78">
    <location>
        <begin position="661"/>
        <end position="666"/>
    </location>
</feature>
<feature type="helix" evidence="78">
    <location>
        <begin position="668"/>
        <end position="689"/>
    </location>
</feature>
<feature type="helix" evidence="78">
    <location>
        <begin position="692"/>
        <end position="694"/>
    </location>
</feature>
<feature type="helix" evidence="78">
    <location>
        <begin position="702"/>
        <end position="718"/>
    </location>
</feature>
<feature type="strand" evidence="76">
    <location>
        <begin position="725"/>
        <end position="727"/>
    </location>
</feature>
<feature type="helix" evidence="78">
    <location>
        <begin position="728"/>
        <end position="737"/>
    </location>
</feature>
<feature type="strand" evidence="78">
    <location>
        <begin position="739"/>
        <end position="741"/>
    </location>
</feature>
<feature type="strand" evidence="78">
    <location>
        <begin position="753"/>
        <end position="756"/>
    </location>
</feature>
<feature type="helix" evidence="78">
    <location>
        <begin position="761"/>
        <end position="772"/>
    </location>
</feature>
<feature type="helix" evidence="78">
    <location>
        <begin position="773"/>
        <end position="775"/>
    </location>
</feature>
<feature type="helix" evidence="78">
    <location>
        <begin position="777"/>
        <end position="780"/>
    </location>
</feature>
<feature type="helix" evidence="78">
    <location>
        <begin position="785"/>
        <end position="798"/>
    </location>
</feature>
<feature type="turn" evidence="78">
    <location>
        <begin position="799"/>
        <end position="802"/>
    </location>
</feature>
<feature type="helix" evidence="78">
    <location>
        <begin position="804"/>
        <end position="811"/>
    </location>
</feature>
<feature type="helix" evidence="78">
    <location>
        <begin position="816"/>
        <end position="818"/>
    </location>
</feature>
<feature type="helix" evidence="78">
    <location>
        <begin position="823"/>
        <end position="826"/>
    </location>
</feature>
<feature type="helix" evidence="78">
    <location>
        <begin position="830"/>
        <end position="851"/>
    </location>
</feature>
<feature type="helix" evidence="78">
    <location>
        <begin position="854"/>
        <end position="858"/>
    </location>
</feature>
<feature type="helix" evidence="78">
    <location>
        <begin position="859"/>
        <end position="864"/>
    </location>
</feature>
<feature type="helix" evidence="78">
    <location>
        <begin position="866"/>
        <end position="872"/>
    </location>
</feature>
<feature type="helix" evidence="78">
    <location>
        <begin position="874"/>
        <end position="877"/>
    </location>
</feature>
<feature type="helix" evidence="78">
    <location>
        <begin position="880"/>
        <end position="886"/>
    </location>
</feature>
<reference key="1">
    <citation type="journal article" date="1988" name="Biochem. J.">
        <title>The complete amino acid sequence of the human erythrocyte membrane anion-transport protein deduced from the cDNA sequence.</title>
        <authorList>
            <person name="Tanner M.J.A."/>
            <person name="Martin P.G."/>
            <person name="High S."/>
        </authorList>
    </citation>
    <scope>NUCLEOTIDE SEQUENCE [MRNA]</scope>
    <source>
        <tissue>Blood</tissue>
    </source>
</reference>
<reference key="2">
    <citation type="journal article" date="1989" name="Proc. Natl. Acad. Sci. U.S.A.">
        <title>Cloning and characterization of band 3, the human erythrocyte anion-exchange protein (AE1).</title>
        <authorList>
            <person name="Lux S.E."/>
            <person name="John K.M."/>
            <person name="Kopito R.R."/>
            <person name="Lodish H.F."/>
        </authorList>
    </citation>
    <scope>NUCLEOTIDE SEQUENCE [MRNA]</scope>
</reference>
<reference key="3">
    <citation type="journal article" date="2006" name="Pediatr. Nephrol.">
        <title>Recessive distal renal tubular acidosis in Sarawak caused by AE1 mutations.</title>
        <authorList>
            <person name="Choo K.E."/>
            <person name="Nicoli T.K."/>
            <person name="Bruce L.J."/>
            <person name="Tanner M.J."/>
            <person name="Ruiz-Linares A."/>
            <person name="Wrong O.M."/>
        </authorList>
    </citation>
    <scope>NUCLEOTIDE SEQUENCE [MRNA]</scope>
    <scope>VARIANT ALA-38</scope>
</reference>
<reference key="4">
    <citation type="submission" date="2009-09" db="EMBL/GenBank/DDBJ databases">
        <title>Novel anion exchanger-1 expression in Southeast Asian populations.</title>
        <authorList>
            <person name="Hsu K."/>
            <person name="Huang S.-Y."/>
            <person name="Chi N."/>
            <person name="Lin M."/>
        </authorList>
    </citation>
    <scope>NUCLEOTIDE SEQUENCE [MRNA]</scope>
    <source>
        <tissue>Blood</tissue>
    </source>
</reference>
<reference key="5">
    <citation type="submission" date="2005-05" db="EMBL/GenBank/DDBJ databases">
        <authorList>
            <consortium name="SeattleSNPs variation discovery resource"/>
        </authorList>
    </citation>
    <scope>NUCLEOTIDE SEQUENCE [GENOMIC DNA]</scope>
    <scope>VARIANTS ALA-38; GLU-56; LYS-508 AND ILE-862</scope>
</reference>
<reference key="6">
    <citation type="submission" date="2005-09" db="EMBL/GenBank/DDBJ databases">
        <authorList>
            <person name="Mural R.J."/>
            <person name="Istrail S."/>
            <person name="Sutton G."/>
            <person name="Florea L."/>
            <person name="Halpern A.L."/>
            <person name="Mobarry C.M."/>
            <person name="Lippert R."/>
            <person name="Walenz B."/>
            <person name="Shatkay H."/>
            <person name="Dew I."/>
            <person name="Miller J.R."/>
            <person name="Flanigan M.J."/>
            <person name="Edwards N.J."/>
            <person name="Bolanos R."/>
            <person name="Fasulo D."/>
            <person name="Halldorsson B.V."/>
            <person name="Hannenhalli S."/>
            <person name="Turner R."/>
            <person name="Yooseph S."/>
            <person name="Lu F."/>
            <person name="Nusskern D.R."/>
            <person name="Shue B.C."/>
            <person name="Zheng X.H."/>
            <person name="Zhong F."/>
            <person name="Delcher A.L."/>
            <person name="Huson D.H."/>
            <person name="Kravitz S.A."/>
            <person name="Mouchard L."/>
            <person name="Reinert K."/>
            <person name="Remington K.A."/>
            <person name="Clark A.G."/>
            <person name="Waterman M.S."/>
            <person name="Eichler E.E."/>
            <person name="Adams M.D."/>
            <person name="Hunkapiller M.W."/>
            <person name="Myers E.W."/>
            <person name="Venter J.C."/>
        </authorList>
    </citation>
    <scope>NUCLEOTIDE SEQUENCE [LARGE SCALE GENOMIC DNA]</scope>
</reference>
<reference key="7">
    <citation type="journal article" date="2004" name="Genome Res.">
        <title>The status, quality, and expansion of the NIH full-length cDNA project: the Mammalian Gene Collection (MGC).</title>
        <authorList>
            <consortium name="The MGC Project Team"/>
        </authorList>
    </citation>
    <scope>NUCLEOTIDE SEQUENCE [LARGE SCALE MRNA]</scope>
    <scope>VARIANT HIS-27</scope>
    <source>
        <tissue>Cerebellum</tissue>
    </source>
</reference>
<reference key="8">
    <citation type="journal article" date="1989" name="Biochim. Biophys. Acta">
        <title>Primary structure of the cytoplasmic domain of human erythrocyte protein band 3. Comparison with its sequence in the mouse.</title>
        <authorList>
            <person name="Yannoukakos D."/>
            <person name="Vasseur C."/>
            <person name="Blouquit Y."/>
            <person name="Bursaux E."/>
            <person name="Wajcman H."/>
        </authorList>
    </citation>
    <scope>PROTEIN SEQUENCE OF 1-199; 220-292 AND 347-370</scope>
    <scope>ACETYLATION AT MET-1</scope>
</reference>
<reference key="9">
    <citation type="journal article" date="1983" name="J. Biol. Chem.">
        <title>Amino acid sequence of the N alpha-terminal 201 residues of human erythrocyte membrane band 3.</title>
        <authorList>
            <person name="Kaul R.K."/>
            <person name="Murthy S.N.P."/>
            <person name="Reddy A.G."/>
            <person name="Steck T.L."/>
            <person name="Kohler H."/>
        </authorList>
    </citation>
    <scope>PROTEIN SEQUENCE OF 1-201</scope>
</reference>
<reference key="10">
    <citation type="journal article" date="1978" name="J. Biol. Chem.">
        <title>Orientation of the band 3 polypeptide from human erythrocyte membranes. Identification of NH2-terminal sequence and site of carbohydrate attachment.</title>
        <authorList>
            <person name="Drickamer L.K."/>
        </authorList>
    </citation>
    <scope>PROTEIN SEQUENCE OF 1-3</scope>
</reference>
<reference key="11">
    <citation type="journal article" date="1993" name="Am. J. Physiol.">
        <title>Anion exchanger 1 in human kidney and oncocytoma differs from erythroid AE1 in its NH2 terminus.</title>
        <authorList>
            <person name="Kollert-Jons A."/>
            <person name="Wagner S."/>
            <person name="Hubner S."/>
            <person name="Appelhans H."/>
            <person name="Drenckhahn D."/>
        </authorList>
    </citation>
    <scope>NUCLEOTIDE SEQUENCE [MRNA] OF 66-180 (ISOFORM 2)</scope>
    <scope>SUBCELLULAR LOCATION</scope>
    <scope>TISSUE SPECIFICITY</scope>
</reference>
<reference key="12">
    <citation type="journal article" date="1992" name="J. Biol. Chem.">
        <title>A structural study of the membrane domain of band 3 by tryptic digestion. Conformational change of band 3 in situ induced by alkali treatment.</title>
        <authorList>
            <person name="Kang D."/>
            <person name="Okubo K."/>
            <person name="Hamasaki N."/>
            <person name="Kuroda N."/>
            <person name="Shiraki H."/>
        </authorList>
    </citation>
    <scope>PROTEIN SEQUENCE OF 361-372; 390-399; 604-613; 632-639; 647-656; 699-729; 731-743; 761-781 AND 818-826</scope>
    <scope>SYNTHESIS OF 646-656 AND 817-827</scope>
</reference>
<reference key="13">
    <citation type="journal article" date="1983" name="Biochem. J.">
        <title>The human erythrocyte anion-transport protein. Partial amino acid sequence, conformation and a possible molecular mechanism for anion exchange.</title>
        <authorList>
            <person name="Brock C.J."/>
            <person name="Tanner M.J.A."/>
            <person name="Kempf C."/>
        </authorList>
    </citation>
    <scope>PROTEIN SEQUENCE OF 559-630</scope>
</reference>
<reference key="14">
    <citation type="journal article" date="1992" name="J. Biol. Chem.">
        <title>Anion-proton cotransport through the human red blood cell band 3 protein. Role of glutamate 681.</title>
        <authorList>
            <person name="Jennings M.L."/>
            <person name="Smith J.S."/>
        </authorList>
    </citation>
    <scope>PROTEIN SEQUENCE OF 665-688</scope>
    <scope>ROLE OF GLU-681</scope>
</reference>
<reference key="15">
    <citation type="journal article" date="1995" name="Br. J. Haematol.">
        <title>Band 3 Chur: a variant associated with band 3-deficient hereditary spherocytosis and substitution in a highly conserved position of transmembrane segment 11.</title>
        <authorList>
            <person name="Maillet P."/>
            <person name="Vallier A."/>
            <person name="Reinhart W.H."/>
            <person name="Wyss E.J."/>
            <person name="Ott P."/>
            <person name="Texier P."/>
            <person name="Baklouti F."/>
            <person name="Tanner M.J.A."/>
            <person name="Delaunay J."/>
            <person name="Alloisio N."/>
        </authorList>
    </citation>
    <scope>NUCLEOTIDE SEQUENCE [MRNA] OF 757-778</scope>
    <scope>VARIANT SPH4 ASP-771</scope>
</reference>
<reference key="16">
    <citation type="journal article" date="1988" name="J. Biol. Chem.">
        <title>Localization of the pyridoxal phosphate binding site at the COOH-terminal region of erythrocyte band 3 protein.</title>
        <authorList>
            <person name="Kawano Y."/>
            <person name="Okubo K."/>
            <person name="Tokunaga F."/>
            <person name="Miyata T."/>
            <person name="Iwanaga S."/>
            <person name="Hamasaki N."/>
        </authorList>
    </citation>
    <scope>PROTEIN SEQUENCE OF 834-911</scope>
</reference>
<reference key="17">
    <citation type="journal article" date="1990" name="Mol. Biochem. Parasitol.">
        <title>Expression, purification, biochemical characterization and inhibition of recombinant Plasmodium falciparum aldolase.</title>
        <authorList>
            <person name="Doebeli H."/>
            <person name="Trzeciak A."/>
            <person name="Gillessen D."/>
            <person name="Matile H."/>
            <person name="Srivastava I.K."/>
            <person name="Perrin L.H."/>
            <person name="Jakob P.E."/>
            <person name="Certa U."/>
        </authorList>
    </citation>
    <scope>INTERACTION WITH P.FALCIPARUM FBPA (MICROBIAL INFECTION)</scope>
    <scope>TISSUE SPECIFICITY</scope>
</reference>
<reference key="18">
    <citation type="journal article" date="1991" name="Biochim. Biophys. Acta">
        <title>Phosphorylation sites in human erythrocyte band 3 protein.</title>
        <authorList>
            <person name="Yannoukakos D."/>
            <person name="Vasseur C."/>
            <person name="Piau J.-P."/>
            <person name="Wajcman H."/>
            <person name="Bursaux E."/>
        </authorList>
    </citation>
    <scope>PHOSPHORYLATION AT TYR-8; TYR-21 AND TYR-46</scope>
</reference>
<reference key="19">
    <citation type="journal article" date="1991" name="J. Biol. Chem.">
        <title>Palmitoylation of cysteine 69 from the COOH-terminal of band 3 protein in the human erythrocyte membrane. Acylation occurs in the middle of the consensus sequence of F--I-IICLAVL found in band 3 protein and G2 protein of Rift Valley fever virus.</title>
        <authorList>
            <person name="Okubo K."/>
            <person name="Hamasaki N."/>
            <person name="Hara K."/>
            <person name="Kageura M."/>
        </authorList>
    </citation>
    <scope>PALMITOYLATION AT CYS-843</scope>
</reference>
<reference key="20">
    <citation type="journal article" date="1995" name="J. Biol. Chem.">
        <title>The ANK repeats of erythrocyte ankyrin form two distinct but cooperative binding sites for the erythrocyte anion exchanger.</title>
        <authorList>
            <person name="Michaely P."/>
            <person name="Bennett V."/>
        </authorList>
    </citation>
    <scope>INTERACTION WITH ANK1</scope>
</reference>
<reference key="21">
    <citation type="journal article" date="2000" name="Biochem. J.">
        <title>Processing of N-linked oligosaccharide depends on its location in the anion exchanger, AE1, membrane glycoprotein.</title>
        <authorList>
            <person name="Li J."/>
            <person name="Quilty J."/>
            <person name="Popov M."/>
            <person name="Reithmeier R.A."/>
        </authorList>
    </citation>
    <scope>GLYCOSYLATION AT ASN-642</scope>
</reference>
<reference key="22">
    <citation type="journal article" date="2000" name="Blood">
        <title>Sequential phosphorylation of protein band 3 by Syk and Lyn tyrosine kinases in intact human erythrocytes: identification of primary and secondary phosphorylation sites.</title>
        <authorList>
            <person name="Brunati A.M."/>
            <person name="Bordin L."/>
            <person name="Clari G."/>
            <person name="James P."/>
            <person name="Quadroni M."/>
            <person name="Baritono E."/>
            <person name="Pinna L.A."/>
            <person name="Donella-Deana A."/>
        </authorList>
    </citation>
    <scope>PHOSPHORYLATION AT TYR-8; TYR-21; TYR-359 AND TYR-904</scope>
</reference>
<reference key="23">
    <citation type="journal article" date="2003" name="Proc. Natl. Acad. Sci. U.S.A.">
        <title>Band 3 is a host receptor binding merozoite surface protein 1 during the Plasmodium falciparum invasion of erythrocytes.</title>
        <authorList>
            <person name="Goel V.K."/>
            <person name="Li X."/>
            <person name="Chen H."/>
            <person name="Liu S.C."/>
            <person name="Chishti A.H."/>
            <person name="Oh S.S."/>
        </authorList>
    </citation>
    <scope>FUNCTION (MICROBIAL INFECTION)</scope>
    <scope>INTERACTION WITH P.FALCIPARUM MSP1 (MICROBIAL INFECTION)</scope>
</reference>
<reference key="24">
    <citation type="journal article" date="2004" name="J. Biol. Chem.">
        <title>A co-ligand complex anchors Plasmodium falciparum merozoites to the erythrocyte invasion receptor band 3.</title>
        <authorList>
            <person name="Li X."/>
            <person name="Chen H."/>
            <person name="Oo T.H."/>
            <person name="Daly T.M."/>
            <person name="Bergman L.W."/>
            <person name="Liu S.C."/>
            <person name="Chishti A.H."/>
            <person name="Oh S.S."/>
        </authorList>
    </citation>
    <scope>FUNCTION (MICROBIAL INFECTION)</scope>
    <scope>INTERACTION WITH P.FALCIPARUM MSP9 (MICROBIAL INFECTION)</scope>
</reference>
<reference key="25">
    <citation type="journal article" date="2011" name="BMC Syst. Biol.">
        <title>Initial characterization of the human central proteome.</title>
        <authorList>
            <person name="Burkard T.R."/>
            <person name="Planyavsky M."/>
            <person name="Kaupe I."/>
            <person name="Breitwieser F.P."/>
            <person name="Buerckstuemmer T."/>
            <person name="Bennett K.L."/>
            <person name="Superti-Furga G."/>
            <person name="Colinge J."/>
        </authorList>
    </citation>
    <scope>IDENTIFICATION BY MASS SPECTROMETRY [LARGE SCALE ANALYSIS]</scope>
</reference>
<reference key="26">
    <citation type="journal article" date="2013" name="Biochim. Biophys. Acta">
        <title>Stomatin interacts with GLUT1/SLC2A1, band 3/SLC4A1, and aquaporin-1 in human erythrocyte membrane domains.</title>
        <authorList>
            <person name="Rungaldier S."/>
            <person name="Oberwagner W."/>
            <person name="Salzer U."/>
            <person name="Csaszar E."/>
            <person name="Prohaska R."/>
        </authorList>
    </citation>
    <scope>SUBCELLULAR LOCATION</scope>
    <scope>TISSUE SPECIFICITY</scope>
    <scope>INTERACTION WITH STOM</scope>
    <scope>SUBUNIT</scope>
</reference>
<reference key="27">
    <citation type="journal article" date="2014" name="J. Proteomics">
        <title>An enzyme assisted RP-RPLC approach for in-depth analysis of human liver phosphoproteome.</title>
        <authorList>
            <person name="Bian Y."/>
            <person name="Song C."/>
            <person name="Cheng K."/>
            <person name="Dong M."/>
            <person name="Wang F."/>
            <person name="Huang J."/>
            <person name="Sun D."/>
            <person name="Wang L."/>
            <person name="Ye M."/>
            <person name="Zou H."/>
        </authorList>
    </citation>
    <scope>IDENTIFICATION BY MASS SPECTROMETRY [LARGE SCALE ANALYSIS]</scope>
    <source>
        <tissue>Liver</tissue>
    </source>
</reference>
<reference key="28">
    <citation type="journal article" date="2015" name="Biochem. Biophys. Res. Commun.">
        <title>Transmembrane protein 139 (TMEM139) interacts with human kidney isoform of anion exchanger 1 (kAE1).</title>
        <authorList>
            <person name="Nuiplot N.O."/>
            <person name="Junking M."/>
            <person name="Duangtum N."/>
            <person name="Khunchai S."/>
            <person name="Sawasdee N."/>
            <person name="Yenchitsomanus P.T."/>
            <person name="Akkarapatumwong V."/>
        </authorList>
    </citation>
    <scope>INTERACTION WITH TMEM139 (ISOFORM 2)</scope>
</reference>
<reference key="29">
    <citation type="journal article" date="2017" name="Sci. Rep.">
        <title>Stomatin modulates the activity of the Anion Exchanger 1 (AE1, SLC4A1).</title>
        <authorList>
            <person name="Genetet S."/>
            <person name="Desrames A."/>
            <person name="Chouali Y."/>
            <person name="Ripoche P."/>
            <person name="Lopez C."/>
            <person name="Mouro-Chanteloup I."/>
        </authorList>
    </citation>
    <scope>FUNCTION</scope>
    <scope>TRANSPORTER ACTIVITY</scope>
    <scope>INTERACTION WITH STOM</scope>
</reference>
<reference key="30">
    <citation type="journal article" date="1993" name="EMBO J.">
        <title>Two-dimensional structure of the membrane domain of human band 3, the anion transport protein of the erythrocyte membrane.</title>
        <authorList>
            <person name="Wang D.N."/>
            <person name="Kuehlbrandt W."/>
            <person name="Sarabia V.E."/>
            <person name="Reithmeier R.A.F."/>
        </authorList>
    </citation>
    <scope>STRUCTURE BY ELECTRON MICROSCOPY</scope>
</reference>
<reference key="31">
    <citation type="journal article" date="1994" name="EMBO J.">
        <title>Three-dimensional map of the dimeric membrane domain of the human erythrocyte anion exchanger, Band 3.</title>
        <authorList>
            <person name="Wang D.N."/>
            <person name="Sarabia V.E."/>
            <person name="Reithmeier R.A.F."/>
            <person name="Kuehlbrandt W."/>
        </authorList>
    </citation>
    <scope>STRUCTURE BY ELECTRON MICROSCOPY</scope>
</reference>
<reference evidence="64 65 66 67" key="32">
    <citation type="journal article" date="1994" name="Eur. J. Biochem.">
        <title>The solution structures of the first and second transmembrane-spanning segments of band 3.</title>
        <authorList>
            <person name="Gargaro A.R."/>
            <person name="Bloomberg G.B."/>
            <person name="Dempsey C.E."/>
            <person name="Murray M."/>
            <person name="Tanner M.J.A."/>
        </authorList>
    </citation>
    <scope>STRUCTURE BY NMR OF 405-424 AND 436-456</scope>
</reference>
<reference evidence="69 70" key="33">
    <citation type="journal article" date="1995" name="Biochemistry">
        <title>Solution structure of a band 3 peptide inhibitor bound to aldolase: a proposed mechanism for regulating binding by tyrosine phosphorylation.</title>
        <authorList>
            <person name="Schneider M.L."/>
            <person name="Post C.B."/>
        </authorList>
    </citation>
    <scope>STRUCTURE BY NMR OF 1-16</scope>
</reference>
<reference evidence="71" key="34">
    <citation type="journal article" date="1998" name="Biochemistry">
        <title>Insights into tyrosine phosphorylation control of protein-protein association from the NMR structure of a band 3 peptide inhibitor bound to glyceraldehyde-3-phosphate dehydrogenase.</title>
        <authorList>
            <person name="Eisenmesser E.Z."/>
            <person name="Post C.B."/>
        </authorList>
    </citation>
    <scope>STRUCTURE BY NMR OF 1-16</scope>
</reference>
<reference evidence="63" key="35">
    <citation type="journal article" date="1998" name="Biochem. Soc. Trans.">
        <title>Studies on the structure of a transmembrane region and a cytoplasmic loop of the human red cell anion exchanger.</title>
        <authorList>
            <person name="Chambers E.J."/>
            <person name="Askin D."/>
            <person name="Bloomberg G.B."/>
            <person name="Ring S.M."/>
            <person name="Tanner M.J."/>
        </authorList>
    </citation>
    <scope>STRUCTURE BY NMR OF 389-430</scope>
</reference>
<reference evidence="62" key="36">
    <citation type="journal article" date="1998" name="Biochemistry">
        <title>NMR solution structure of a cytoplasmic surface loop of the human red cell anion transporter, band 3.</title>
        <authorList>
            <person name="Askin D."/>
            <person name="Bloomberg G.B."/>
            <person name="Chambers E.J."/>
            <person name="Tanner M.J."/>
        </authorList>
    </citation>
    <scope>STRUCTURE BY NMR OF 803-835</scope>
</reference>
<reference evidence="68" key="37">
    <citation type="journal article" date="2000" name="Blood">
        <title>Crystallographic structure and functional interpretation of the cytoplasmic domain of erythrocyte membrane band 3.</title>
        <authorList>
            <person name="Zhang D."/>
            <person name="Kiyatkin A."/>
            <person name="Bolin J.T."/>
            <person name="Low P.S."/>
        </authorList>
    </citation>
    <scope>X-RAY CRYSTALLOGRAPHY (2.6 ANGSTROMS) OF 1-379</scope>
    <scope>SUBUNIT</scope>
</reference>
<reference evidence="72" key="38">
    <citation type="journal article" date="2013" name="J. Biol. Chem.">
        <title>A substrate access tunnel in the cytosolic domain is not an essential feature of the solute carrier 4 (SLC4) family of bicarbonate transporters.</title>
        <authorList>
            <person name="Shnitsar V."/>
            <person name="Li J."/>
            <person name="Li X."/>
            <person name="Calmettes C."/>
            <person name="Basu A."/>
            <person name="Casey J.R."/>
            <person name="Moraes T.F."/>
            <person name="Reithmeier R.A."/>
        </authorList>
    </citation>
    <scope>X-RAY CRYSTALLOGRAPHY (2.23 ANGSTROMS) OF 51-356</scope>
    <scope>FUNCTION</scope>
    <scope>SUBCELLULAR LOCATION</scope>
    <scope>GLYCOSYLATION AT ASN-642</scope>
    <scope>MUTAGENESIS OF GLU-85; ARG-283; ASN-642 AND GLU-681</scope>
    <scope>CHARACTERIZATION OF VARIANT ACANTHOCYTOSIS LEU-868</scope>
    <scope>TRANSPORTER ACTIVITY</scope>
</reference>
<reference evidence="73" key="39">
    <citation type="journal article" date="2015" name="Science">
        <title>Crystal structure of the anion exchanger domain of human erythrocyte band 3.</title>
        <authorList>
            <person name="Arakawa T."/>
            <person name="Kobayashi-Yurugi T."/>
            <person name="Alguel Y."/>
            <person name="Iwanari H."/>
            <person name="Hatae H."/>
            <person name="Iwata M."/>
            <person name="Abe Y."/>
            <person name="Hino T."/>
            <person name="Ikeda-Suno C."/>
            <person name="Kuma H."/>
            <person name="Kang D."/>
            <person name="Murata T."/>
            <person name="Hamakubo T."/>
            <person name="Cameron A.D."/>
            <person name="Kobayashi T."/>
            <person name="Hamasaki N."/>
            <person name="Iwata S."/>
        </authorList>
    </citation>
    <scope>X-RAY CRYSTALLOGRAPHY (3.50 ANGSTROMS)</scope>
    <scope>TISSUE SPECIFICITY</scope>
    <scope>SUBCELLULAR LOCATION</scope>
    <scope>TOPOLOGY</scope>
    <scope>GLYCOSYLATION</scope>
</reference>
<reference key="40">
    <citation type="journal article" date="2022" name="Nat. Struct. Mol. Biol.">
        <title>Architecture of the human erythrocyte ankyrin-1 complex.</title>
        <authorList>
            <person name="Vallese F."/>
            <person name="Kim K."/>
            <person name="Yen L.Y."/>
            <person name="Johnston J.D."/>
            <person name="Noble A.J."/>
            <person name="Cali T."/>
            <person name="Clarke O.B."/>
        </authorList>
    </citation>
    <scope>STRUCTURE BY ELECTRON MICROSCOPY (2.30 ANGSTROMS)</scope>
    <scope>FUNCTION</scope>
    <scope>SUBUNIT</scope>
    <scope>ANKYRIN-1 COMPLEX IDENTIFICATION</scope>
    <scope>GLYCOSYLATION AT ASN-642</scope>
    <scope>INTERACTION WITH GYPA; EPB42 AND ANK1</scope>
</reference>
<reference key="41">
    <citation type="journal article" date="1991" name="Blood">
        <title>Human erythrocyte band 3 polymorphism (band 3 Memphis): characterization of the structural modification (Lys 56--&gt;Glu) by protein chemistry methods.</title>
        <authorList>
            <person name="Yannoukakos D."/>
            <person name="Vasseur C."/>
            <person name="Driancourt C."/>
            <person name="Blouquit Y."/>
            <person name="Delauney J."/>
            <person name="Wajcman H."/>
            <person name="Bursaux E."/>
        </authorList>
    </citation>
    <scope>VARIANT MEMPHIS GLU-56</scope>
</reference>
<reference key="42">
    <citation type="journal article" date="1991" name="Proc. Natl. Acad. Sci. U.S.A.">
        <title>Deletion in erythrocyte band 3 gene in malaria-resistant Southeast Asian ovalocytosis.</title>
        <authorList>
            <person name="Jarolim P."/>
            <person name="Palek J."/>
            <person name="Amato D."/>
            <person name="Hassan K."/>
            <person name="Sapak P."/>
            <person name="Nurse G.T."/>
            <person name="Rubin H.L."/>
            <person name="Zhai S."/>
            <person name="Sahr K.E."/>
            <person name="Liu S.-C."/>
        </authorList>
    </citation>
    <scope>VARIANT SAO 400-ALA--ALA-408 DEL</scope>
    <scope>VARIANT MEMPHIS GLU-56</scope>
</reference>
<reference key="43">
    <citation type="journal article" date="1992" name="Blood">
        <title>Band 3 Tuscaloosa: Pro-327--&gt;Arg substitution in the cytoplasmic domain of erythrocyte band 3 protein associated with spherocytic hemolytic anemia and partial deficiency of protein 4.2.</title>
        <authorList>
            <person name="Jarolim P."/>
            <person name="Palek J."/>
            <person name="Rubin H.L."/>
            <person name="Prchal J.T."/>
            <person name="Korsgren C."/>
            <person name="Cohen C.M."/>
        </authorList>
    </citation>
    <scope>VARIANT SPH4 ARG-327</scope>
</reference>
<reference key="44">
    <citation type="journal article" date="1992" name="J. Mol. Biol.">
        <title>Basis of unique red cell membrane properties in hereditary ovalocytosis.</title>
        <authorList>
            <person name="Schofield A.E."/>
            <person name="Tanner M.J.A."/>
            <person name="Pinder J.C."/>
            <person name="Clough B."/>
            <person name="Bayley P.M."/>
            <person name="Nash G.B."/>
            <person name="Dluzewski A.R."/>
            <person name="Reardon D.M."/>
            <person name="Cox T.M."/>
            <person name="Wilson R.J.M."/>
            <person name="Gratzer W.B."/>
        </authorList>
    </citation>
    <scope>VARIANT SAO 400-ALA--ALA-408 DEL</scope>
    <scope>CHARACTERIZATION OF VARIANT SAO 400-ALA--ALA-408 DEL</scope>
    <scope>FUNCTION</scope>
    <scope>SUBCELLULAR LOCATION</scope>
    <scope>TISSUE SPECIFICITY</scope>
</reference>
<reference key="45">
    <citation type="journal article" date="1993" name="Biochem. J.">
        <title>Band 3 HT, a human red-cell variant associated with acanthocytosis and increased anion transport, carries the mutation Pro-868--&gt;Leu in the membrane domain of band 3.</title>
        <authorList>
            <person name="Bruce L.J."/>
            <person name="Kay M.M."/>
            <person name="Lawrence C."/>
            <person name="Tanner M.J."/>
        </authorList>
    </citation>
    <scope>VARIANT ACANTHOCYTOSIS LEU-868</scope>
</reference>
<reference key="46">
    <citation type="journal article" date="1993" name="Blood">
        <title>Human erythrocyte protein 4.2 deficiency associated with hemolytic anemia and a homozygous 40 glutamic acid--&gt;lysine substitution in the cytoplasmic domain of band 3 (band 3Montefiore).</title>
        <authorList>
            <person name="Rybicki A.C."/>
            <person name="Qiu J.J.H."/>
            <person name="Musto S."/>
            <person name="Rosen N.L."/>
            <person name="Nagel R.L."/>
            <person name="Schwartz R.S."/>
        </authorList>
    </citation>
    <scope>VARIANT LYS-40</scope>
</reference>
<reference key="47">
    <citation type="journal article" date="1994" name="J. Biol. Chem.">
        <title>Band 3 Memphis variant II. Altered stilbene disulfonate binding and the Diego (Dia) blood group antigen are associated with the human erythrocyte band 3 mutation Pro-854--&gt;Leu.</title>
        <authorList>
            <person name="Bruce L.J."/>
            <person name="Anstee D.J."/>
            <person name="Spring F.A."/>
            <person name="Tanner M.J."/>
        </authorList>
    </citation>
    <scope>VARIANTS BLOOD GROUP DI(A)/MEMPHIS-II GLU-56 AND LEU-854</scope>
</reference>
<reference key="48">
    <citation type="journal article" date="1995" name="Blood">
        <title>Changes in the blood group Wright antigens are associated with a mutation at amino acid 658 in human erythrocyte band 3: a site of interaction between band 3 and glycophorin A under certain conditions.</title>
        <authorList>
            <person name="Bruce L.J."/>
            <person name="Ring S.M."/>
            <person name="Anstee D.J."/>
            <person name="Reid M.E."/>
            <person name="Wilkinson S."/>
            <person name="Tanner M.J."/>
        </authorList>
    </citation>
    <scope>VARIANT BLOOD GROUP WR(A) LYS-658</scope>
</reference>
<reference key="49">
    <citation type="journal article" date="1995" name="Blood">
        <title>Mutations of conserved arginines in the membrane domain of erythroid band 3 lead to a decrease in membrane-associated band 3 and to the phenotype of hereditary spherocytosis.</title>
        <authorList>
            <person name="Jarolim P."/>
            <person name="Rubin H.L."/>
            <person name="Brabec V."/>
            <person name="Chrobak L."/>
            <person name="Zolotarev A.S."/>
            <person name="Alper S.L."/>
            <person name="Brugnara C."/>
            <person name="Wichterle H."/>
            <person name="Palek J."/>
        </authorList>
    </citation>
    <scope>VARIANTS SPH4 GLN-760; TRP-760; CYS-808 AND TRP-870</scope>
</reference>
<reference key="50">
    <citation type="journal article" date="1996" name="Blood">
        <title>Characterization of 13 novel band 3 gene defects in hereditary spherocytosis with band 3 deficiency.</title>
        <authorList>
            <person name="Jarolim P."/>
            <person name="Murray J.L."/>
            <person name="Rubin H.L."/>
            <person name="Taylor W.M."/>
            <person name="Prchal J.T."/>
            <person name="Ballas S.K."/>
            <person name="Snyder L.M."/>
            <person name="Chrobak L."/>
            <person name="Melrose W.D."/>
            <person name="Brabec V."/>
            <person name="Palek J."/>
        </authorList>
    </citation>
    <scope>VARIANTS SPH4 ASP-285; GLU-455; PRO-707; PRO-834 AND MET-837</scope>
</reference>
<reference key="51">
    <citation type="journal article" date="1996" name="Nat. Genet.">
        <title>Ankyrin-1 mutations are a major cause of dominant and recessive hereditary spherocytosis.</title>
        <authorList>
            <person name="Eber S.W."/>
            <person name="Gonzalez J.M."/>
            <person name="Lux M.L."/>
            <person name="Scarpa A.L."/>
            <person name="Tse W.T."/>
            <person name="Dornwell M."/>
            <person name="Herbers J."/>
            <person name="Kugler W."/>
            <person name="Oezcan R."/>
            <person name="Pekrun A."/>
            <person name="Gallagher P.G."/>
            <person name="Schroeter W."/>
            <person name="Forget B.G."/>
            <person name="Lux S.E."/>
        </authorList>
    </citation>
    <scope>VARIANTS SPH4 CYS-518 AND MET-663 DEL</scope>
    <scope>VARIANT LYS-40</scope>
</reference>
<reference key="52">
    <citation type="journal article" date="1997" name="Blood">
        <title>Modulation of clinical expression and band 3 deficiency in hereditary spherocytosis.</title>
        <authorList>
            <person name="Alloisio N."/>
            <person name="Texier P."/>
            <person name="Vallier A."/>
            <person name="Ribeiro M.L."/>
            <person name="Morle L."/>
            <person name="Bozon M."/>
            <person name="Bursaux E."/>
            <person name="Maillet P."/>
            <person name="Goncalves P."/>
            <person name="Tanner M.J."/>
            <person name="Tamagnini G."/>
            <person name="Delaunay J."/>
        </authorList>
    </citation>
    <scope>VARIANTS SPH4 SER-147 AND MET-488</scope>
</reference>
<reference key="53">
    <citation type="journal article" date="1997" name="Br. J. Haematol.">
        <title>Novel band 3 variants (bands 3 Foggia, Napoli I and Napoli II) associated with hereditary spherocytosis and band 3 deficiency: status of the D38A polymorphism within the EPB3 locus.</title>
        <authorList>
            <person name="Miraglia del Giudice E."/>
            <person name="Vallier A."/>
            <person name="Maillet P."/>
            <person name="Perrotta S."/>
            <person name="Cutillo S."/>
            <person name="Iolascon A."/>
            <person name="Tanner M.J."/>
            <person name="Delaunay J."/>
            <person name="Alloisio N."/>
        </authorList>
    </citation>
    <scope>VARIANT SPH4 ASN-783</scope>
    <scope>VARIANTS ALA-38 AND MET-73</scope>
</reference>
<reference key="54">
    <citation type="journal article" date="1997" name="Br. J. Haematol.">
        <title>Heterogenous band 3 deficiency in hereditary spherocytosis related to different band 3 gene defects.</title>
        <authorList>
            <person name="Dhermy D."/>
            <person name="Galand C."/>
            <person name="Bournier O."/>
            <person name="Boulanger L."/>
            <person name="Cynober T."/>
            <person name="Schismanoff P.O."/>
            <person name="Bursaux E."/>
            <person name="Tchernia G."/>
            <person name="Boivin P."/>
            <person name="Garbarz M."/>
        </authorList>
    </citation>
    <scope>VARIANTS SPH4 CYS-490 AND MET-837</scope>
</reference>
<reference key="55">
    <citation type="journal article" date="1997" name="Br. J. Haematol.">
        <authorList>
            <person name="Dhermy D."/>
            <person name="Galand C."/>
            <person name="Bournier O."/>
            <person name="Boulanger L."/>
            <person name="Cynober T."/>
            <person name="Schismanoff P.O."/>
            <person name="Bursaux E."/>
            <person name="Tchernia G."/>
            <person name="Boivin P."/>
            <person name="Garbarz M."/>
        </authorList>
    </citation>
    <scope>ERRATUM OF PUBMED:9233560</scope>
</reference>
<reference key="56">
    <citation type="journal article" date="1997" name="J. Clin. Invest.">
        <title>Familial distal renal tubular acidosis is associated with mutations in the red cell anion exchanger (Band 3, AE1) gene.</title>
        <authorList>
            <person name="Bruce L.J."/>
            <person name="Cope D.L."/>
            <person name="Jones G.K."/>
            <person name="Schofield A.E."/>
            <person name="Burley M."/>
            <person name="Povey S."/>
            <person name="Unwin R.J."/>
            <person name="Wrong O."/>
            <person name="Tanner M.J."/>
        </authorList>
    </citation>
    <scope>VARIANTS DRTA1 CYS-589; HIS-589 AND PHE-613</scope>
</reference>
<reference key="57">
    <citation type="journal article" date="1997" name="Transfusion">
        <title>Blood group antigens Rb(a), Tr(a), and Wd(a) are located in the third ectoplasmic loop of erythroid band 3.</title>
        <authorList>
            <person name="Jarolim P."/>
            <person name="Murray J.L."/>
            <person name="Rubin H.L."/>
            <person name="Smart E."/>
            <person name="Moulds J.M."/>
        </authorList>
    </citation>
    <scope>VARIANTS BLOOD GROUPS RB(A); TR(A) AND WD(A)</scope>
</reference>
<reference key="58">
    <citation type="journal article" date="1998" name="Acta Haematol.">
        <title>Band 3 Tokyo: Thr837--&gt;Ala837 substitution in erythrocyte band 3 protein associated with spherocytic hemolysis.</title>
        <authorList>
            <person name="Iwase S."/>
            <person name="Ideguchi H."/>
            <person name="Takao M."/>
            <person name="Horiguchi-Yamada J."/>
            <person name="Iwasaki M."/>
            <person name="Takahara S."/>
            <person name="Sekikawa T."/>
            <person name="Mochizuki S."/>
            <person name="Yamada H."/>
        </authorList>
    </citation>
    <scope>VARIANT SPH4 ALA-837</scope>
</reference>
<reference key="59">
    <citation type="journal article" date="1998" name="Blood">
        <title>Characterization of seven low incidence blood group antigens carried by erythrocyte band 3 protein.</title>
        <authorList>
            <person name="Jarolim P."/>
            <person name="Rubin H.L."/>
            <person name="Zakova D."/>
            <person name="Storry J."/>
            <person name="Reid M.E."/>
        </authorList>
    </citation>
    <scope>VARIANTS BLOOD GROUPS BOW; BP(A); ELO; HG(A); MO(A); VG(A) AND WU</scope>
</reference>
<reference key="60">
    <citation type="journal article" date="1998" name="J. Clin. Invest.">
        <title>Novel AE1 mutations in recessive distal renal tubular acidosis: loss-of-function is rescued by glycophorin A.</title>
        <authorList>
            <person name="Tanphaichitr V.S."/>
            <person name="Sumboonnanonda A."/>
            <person name="Ideguchi H."/>
            <person name="Shayakul C."/>
            <person name="Brugnara C."/>
            <person name="Takao M."/>
            <person name="Veerakul G."/>
            <person name="Alper S.L."/>
        </authorList>
    </citation>
    <scope>VARIANT DRTA4 ASP-701</scope>
</reference>
<reference key="61">
    <citation type="journal article" date="1998" name="Proc. Natl. Acad. Sci. U.S.A.">
        <title>Mutations in the chloride-bicarbonate exchanger gene AE1 cause autosomal dominant but not autosomal recessive distal renal tubular acidosis.</title>
        <authorList>
            <person name="Karet F.E."/>
            <person name="Gainza F.J."/>
            <person name="Gyory A.Z."/>
            <person name="Unwin R.J."/>
            <person name="Wrong O."/>
            <person name="Tanner M.J.A."/>
            <person name="Nayir A."/>
            <person name="Alpay H."/>
            <person name="Santos F."/>
            <person name="Hulton S.A."/>
            <person name="Bakkaloglu A."/>
            <person name="Ozen S."/>
            <person name="Cunningham M.J."/>
            <person name="di Pietro A."/>
            <person name="Walker W.G."/>
            <person name="Lifton R.P."/>
        </authorList>
    </citation>
    <scope>VARIANTS DRTA1 HIS-589 AND SER-589</scope>
</reference>
<reference key="62">
    <citation type="journal article" date="1998" name="Transfusion">
        <title>A Gly565--&gt;Ala substitution in human erythroid band 3 accounts for the Wu blood group polymorphism.</title>
        <authorList>
            <person name="Zelinski T."/>
            <person name="McManus K."/>
            <person name="Punter F."/>
            <person name="Moulds M."/>
            <person name="Coghlan G."/>
        </authorList>
    </citation>
    <scope>VARIANTS BLOOD GROUP WU</scope>
</reference>
<reference key="63">
    <citation type="journal article" date="1999" name="Eur. J. Haematol.">
        <title>Arginine 490 is a hot spot for mutation in the band 3 gene in hereditary spherocytosis.</title>
        <authorList>
            <person name="Lima P.R.M."/>
            <person name="Sales T.S.I."/>
            <person name="Costa F.F."/>
            <person name="Saad S.T.O."/>
        </authorList>
    </citation>
    <scope>VARIANT SPH4 HIS-490</scope>
</reference>
<reference key="64">
    <citation type="journal article" date="2000" name="Biochem. J.">
        <title>Band 3 mutations, renal tubular acidosis and South-East Asian ovalocytosis in Malaysia and Papua New Guinea: loss of up to 95% band 3 transport in red cells.</title>
        <authorList>
            <person name="Bruce L.J."/>
            <person name="Wrong O."/>
            <person name="Toye A.M."/>
            <person name="Young M.T."/>
            <person name="Ogle G."/>
            <person name="Ismail Z."/>
            <person name="Sinha A.K."/>
            <person name="McMaster P."/>
            <person name="Hwaihwanje I."/>
            <person name="Nash G.B."/>
            <person name="Hart S."/>
            <person name="Lavu E."/>
            <person name="Palmer R."/>
            <person name="Othman A."/>
            <person name="Unwin R.J."/>
            <person name="Tanner M.J.A."/>
        </authorList>
    </citation>
    <scope>VARIANTS DRTA4 ASP-701 AND VAL-850 DEL</scope>
    <scope>VARIANT DRTA1 ASP-858</scope>
    <scope>FUNCTION</scope>
    <scope>SUBCELLULAR LOCATION</scope>
    <scope>TISSUE SPECIFICITY</scope>
    <scope>TRANSPORTER ACTIVITY</scope>
</reference>
<reference key="65">
    <citation type="journal article" date="2000" name="Blood">
        <title>Severe hereditary spherocytosis and distal renal tubular acidosis associated with the total absence of band 3.</title>
        <authorList>
            <person name="Ribeiro M.L."/>
            <person name="Alloisio N."/>
            <person name="Almeida H."/>
            <person name="Gomes C."/>
            <person name="Texier P."/>
            <person name="Lemos C."/>
            <person name="Mimoso G."/>
            <person name="Morle L."/>
            <person name="Bey-Cabet F."/>
            <person name="Rudigoz R.-C."/>
            <person name="Delaunay J."/>
            <person name="Tamagnini G."/>
        </authorList>
    </citation>
    <scope>VARIANT SPH4 MET-488</scope>
</reference>
<reference key="66">
    <citation type="journal article" date="2000" name="Int. J. Hematol.">
        <title>Characteristic features of the genotype and phenotype of hereditary spherocytosis in the Japanese population.</title>
        <authorList>
            <person name="Yawata Y."/>
            <person name="Kanzaki A."/>
            <person name="Yawata A."/>
            <person name="Doerfler W."/>
            <person name="Oezcan R."/>
            <person name="Eber S.W."/>
        </authorList>
    </citation>
    <scope>VARIANTS SPH4 ARG-130; ARG-455; ARG-714; TRP-760; GLN-760; HIS-808; ARG-837 AND MET-837</scope>
    <scope>VARIANTS ALA-38; GLU-56; ASP-72 AND LEU-854</scope>
</reference>
<reference key="67">
    <citation type="journal article" date="2000" name="Traffic">
        <title>Trafficking and folding defects in hereditary spherocytosis mutants of the human red cell anion exchanger.</title>
        <authorList>
            <person name="Quilty J.A."/>
            <person name="Reithmeier R.A."/>
        </authorList>
    </citation>
    <scope>CHARACTERIZATION OF VARIANTS PRO-707; GLN-760; TRP-760; CYS-808; PRO-834; MET-837 AND TRP-870</scope>
</reference>
<reference key="68">
    <citation type="journal article" date="2000" name="Transfusion">
        <title>Amino acid substitutions in human erythroid protein band 3 account for the low-incidence antigens NFLD and BOW.</title>
        <authorList>
            <person name="McManus K."/>
            <person name="Pongoski J."/>
            <person name="Coghlan G."/>
            <person name="Zelinski T."/>
        </authorList>
    </citation>
    <scope>VARIANTS BLOOD GROUP NFLD+ ASP-429 AND ALA-561</scope>
    <scope>VARIANT BLOOD GROUP BOW+ SER-561</scope>
</reference>
<reference key="69">
    <citation type="journal article" date="2000" name="Transfusion">
        <title>An amino acid substitution in the putative second extracellular loop of RBC band 3 accounts for the Froese blood group polymorphism.</title>
        <authorList>
            <person name="McManus K."/>
            <person name="Lupe K."/>
            <person name="Coghlan G."/>
            <person name="Zelinski T."/>
        </authorList>
    </citation>
    <scope>VARIANT BLOOD GROUP FR(A+) LYS-480</scope>
</reference>
<reference key="70">
    <citation type="journal article" date="2000" name="Vox Sang.">
        <title>Distinctive Swann blood group genotypes: molecular investigations.</title>
        <authorList>
            <person name="Zelinski T."/>
            <person name="Rusnak A."/>
            <person name="McManus K."/>
            <person name="Coghlan G."/>
        </authorList>
    </citation>
    <scope>VARIANTS BLOOD GROUP SW(A+) GLN-646 AND TRP-646</scope>
</reference>
<reference key="71">
    <citation type="journal article" date="2001" name="Br. J. Haematol.">
        <title>Band 3 Cape Town (E90K) causes severe hereditary spherocytosis in combination with band 3 Prague III.</title>
        <authorList>
            <person name="Bracher N.A."/>
            <person name="Lyons C.A."/>
            <person name="Wessels G."/>
            <person name="Mansvelt E."/>
            <person name="Coetzer T.L."/>
        </authorList>
    </citation>
    <scope>VARIANTS SPH4 LYS-90 AND TRP-870</scope>
</reference>
<reference key="72">
    <citation type="journal article" date="2004" name="Am. J. Kidney Dis.">
        <title>Novel compound heterozygous SLC4A1 mutations in Thai patients with autosomal recessive distal renal tubular acidosis.</title>
        <authorList>
            <person name="Sritippayawan S."/>
            <person name="Sumboonnanonda A."/>
            <person name="Vasuvattakul S."/>
            <person name="Keskanokwong T."/>
            <person name="Sawasdee N."/>
            <person name="Paemanee A."/>
            <person name="Thuwajit P."/>
            <person name="Wilairat P."/>
            <person name="Nimmannit S."/>
            <person name="Malasit P."/>
            <person name="Yenchitsomanus P.T."/>
        </authorList>
    </citation>
    <scope>VARIANTS DRTA4 HIS-602; ASP-701 AND PRO-773</scope>
</reference>
<reference key="73">
    <citation type="journal article" date="2004" name="J. Biol. Chem.">
        <title>A novel missense mutation in AE1 causing autosomal dominant distal renal tubular acidosis retains normal transport function but is mistargeted in polarized epithelial cells.</title>
        <authorList>
            <person name="Rungroj N."/>
            <person name="Devonald M.A.J."/>
            <person name="Cuthbert A.W."/>
            <person name="Reimann F."/>
            <person name="Akkarapatumwong V."/>
            <person name="Yenchitsomanus P.-T."/>
            <person name="Bennett W.M."/>
            <person name="Karet F.E."/>
        </authorList>
    </citation>
    <scope>VARIANT DRTA1 ARG-609</scope>
    <scope>FUNCTION</scope>
    <scope>SUBCELLULAR LOCATION</scope>
    <scope>CHARACTERIZATION OF VARIANT DRTA1 ARG-609</scope>
    <scope>TRANSPORTER ACTIVITY</scope>
</reference>
<reference key="74">
    <citation type="journal article" date="2005" name="Eur. J. Haematol.">
        <title>Band 3Tambau: a de novo mutation in the AE1 gene associated with hereditary spherocytosis. Implications for anion exchange and insertion into the red blood cell membrane.</title>
        <authorList>
            <person name="Lima P.R.M."/>
            <person name="Baratti M.O."/>
            <person name="Chiattone M.L."/>
            <person name="Costa F.F."/>
            <person name="Saad S.T.O."/>
        </authorList>
    </citation>
    <scope>VARIANT SPH4 LYS-663</scope>
</reference>
<reference key="75">
    <citation type="journal article" date="2005" name="Nat. Genet.">
        <title>Monovalent cation leaks in human red cells caused by single amino-acid substitutions in the transport domain of the band 3 chloride-bicarbonate exchanger, AE1.</title>
        <authorList>
            <person name="Bruce L.J."/>
            <person name="Robinson H.C."/>
            <person name="Guizouarn H."/>
            <person name="Borgese F."/>
            <person name="Harrison P."/>
            <person name="King M.-J."/>
            <person name="Goede J.S."/>
            <person name="Coles S.E."/>
            <person name="Gore D.M."/>
            <person name="Lutz H.U."/>
            <person name="Ficarella R."/>
            <person name="Layton D.M."/>
            <person name="Iolascon A."/>
            <person name="Ellory J.C."/>
            <person name="Stewart G.W."/>
        </authorList>
    </citation>
    <scope>INVOLVEMENT IN CHC AND SPH4</scope>
    <scope>VARIANT GLU-56</scope>
    <scope>VARIANTS CHC PRO-687; PRO-731 AND ARG-734</scope>
    <scope>VARIANTS SPH4 TYR-705 AND GLN-760</scope>
    <scope>CHARACTERIZATION OF VARIANTS CHC PRO-687; PRO-731 AND ARG-734</scope>
    <scope>CHARACTERIZATION OF VARIANTS SPH4 TYR-705 AND GLN-760</scope>
    <scope>FUNCTION</scope>
    <scope>TRANSPORTER ACTIVITY</scope>
</reference>
<reference key="76">
    <citation type="journal article" date="2010" name="Mol. Membr. Biol.">
        <title>Impaired trafficking and intracellular retention of mutant kidney anion exchanger 1 proteins (G701D and A858D) associated with distal renal tubular acidosis.</title>
        <authorList>
            <person name="Ungsupravate D."/>
            <person name="Sawasdee N."/>
            <person name="Khositseth S."/>
            <person name="Udomchaiprasertkul W."/>
            <person name="Khoprasert S."/>
            <person name="Li J."/>
            <person name="Reithmeier R.A."/>
            <person name="Yenchitsomanus P.T."/>
        </authorList>
    </citation>
    <scope>CHARACTERIZATION OF VARIANT DRTA4 ASP-701</scope>
    <scope>CHARACTERIZATION OF VARIANT DRTA1 ASP-858</scope>
    <scope>SUBUNIT</scope>
    <scope>SUBCELLULAR LOCATION</scope>
    <scope>FUNCTION</scope>
</reference>
<reference key="77">
    <citation type="journal article" date="2011" name="Am. J. Physiol.">
        <title>Loss-of-function and gain-of-function phenotypes of stomatocytosis mutant RhAG F65S.</title>
        <authorList>
            <person name="Stewart A.K."/>
            <person name="Shmukler B.E."/>
            <person name="Vandorpe D.H."/>
            <person name="Rivera A."/>
            <person name="Heneghan J.F."/>
            <person name="Li X."/>
            <person name="Hsu A."/>
            <person name="Karpatkin M."/>
            <person name="O'Neill A.F."/>
            <person name="Bauer D.E."/>
            <person name="Heeney M.M."/>
            <person name="John K."/>
            <person name="Kuypers F.A."/>
            <person name="Gallagher P.G."/>
            <person name="Lux S.E."/>
            <person name="Brugnara C."/>
            <person name="Westhoff C.M."/>
            <person name="Alper S.L."/>
        </authorList>
    </citation>
    <scope>VARIANT ILE-862</scope>
</reference>
<reference key="78">
    <citation type="journal article" date="2022" name="BMC Med. Genomics">
        <title>Impaired trafficking and instability of mutant kidney anion exchanger 1 proteins associated with autosomal recessive distal renal tubular acidosis.</title>
        <authorList>
            <person name="Deejai N."/>
            <person name="Sawasdee N."/>
            <person name="Nettuwakul C."/>
            <person name="Wanachiwanawin W."/>
            <person name="Sritippayawan S."/>
            <person name="Yenchitsomanus P.T."/>
            <person name="Rungroj N."/>
        </authorList>
    </citation>
    <scope>VARIANTS DRTA4 400-ALA--ALA-408 DEL AND ASN-444</scope>
    <scope>CHARACTERIZATION OF VARIANT DRTA4 ASN-444</scope>
</reference>
<keyword id="KW-0002">3D-structure</keyword>
<keyword id="KW-0007">Acetylation</keyword>
<keyword id="KW-0025">Alternative splicing</keyword>
<keyword id="KW-0039">Anion exchange</keyword>
<keyword id="KW-0095">Blood group antigen</keyword>
<keyword id="KW-1003">Cell membrane</keyword>
<keyword id="KW-0903">Direct protein sequencing</keyword>
<keyword id="KW-0225">Disease variant</keyword>
<keyword id="KW-0250">Elliptocytosis</keyword>
<keyword id="KW-0325">Glycoprotein</keyword>
<keyword id="KW-0360">Hereditary hemolytic anemia</keyword>
<keyword id="KW-0406">Ion transport</keyword>
<keyword id="KW-0449">Lipoprotein</keyword>
<keyword id="KW-0472">Membrane</keyword>
<keyword id="KW-0564">Palmitate</keyword>
<keyword id="KW-0597">Phosphoprotein</keyword>
<keyword id="KW-1267">Proteomics identification</keyword>
<keyword id="KW-1185">Reference proteome</keyword>
<keyword id="KW-0812">Transmembrane</keyword>
<keyword id="KW-1133">Transmembrane helix</keyword>
<keyword id="KW-0813">Transport</keyword>
<gene>
    <name evidence="61" type="primary">SLC4A1</name>
    <name type="synonym">AE1</name>
    <name type="synonym">DI</name>
    <name type="synonym">EPB3</name>
</gene>
<evidence type="ECO:0000250" key="1">
    <source>
        <dbReference type="UniProtKB" id="P04919"/>
    </source>
</evidence>
<evidence type="ECO:0000250" key="2">
    <source>
        <dbReference type="UniProtKB" id="P23562"/>
    </source>
</evidence>
<evidence type="ECO:0000256" key="3">
    <source>
        <dbReference type="SAM" id="MobiDB-lite"/>
    </source>
</evidence>
<evidence type="ECO:0000269" key="4">
    <source>
    </source>
</evidence>
<evidence type="ECO:0000269" key="5">
    <source>
    </source>
</evidence>
<evidence type="ECO:0000269" key="6">
    <source>
    </source>
</evidence>
<evidence type="ECO:0000269" key="7">
    <source>
    </source>
</evidence>
<evidence type="ECO:0000269" key="8">
    <source>
    </source>
</evidence>
<evidence type="ECO:0000269" key="9">
    <source>
    </source>
</evidence>
<evidence type="ECO:0000269" key="10">
    <source>
    </source>
</evidence>
<evidence type="ECO:0000269" key="11">
    <source>
    </source>
</evidence>
<evidence type="ECO:0000269" key="12">
    <source>
    </source>
</evidence>
<evidence type="ECO:0000269" key="13">
    <source>
    </source>
</evidence>
<evidence type="ECO:0000269" key="14">
    <source>
    </source>
</evidence>
<evidence type="ECO:0000269" key="15">
    <source>
    </source>
</evidence>
<evidence type="ECO:0000269" key="16">
    <source>
    </source>
</evidence>
<evidence type="ECO:0000269" key="17">
    <source>
    </source>
</evidence>
<evidence type="ECO:0000269" key="18">
    <source>
    </source>
</evidence>
<evidence type="ECO:0000269" key="19">
    <source>
    </source>
</evidence>
<evidence type="ECO:0000269" key="20">
    <source>
    </source>
</evidence>
<evidence type="ECO:0000269" key="21">
    <source>
    </source>
</evidence>
<evidence type="ECO:0000269" key="22">
    <source>
    </source>
</evidence>
<evidence type="ECO:0000269" key="23">
    <source>
    </source>
</evidence>
<evidence type="ECO:0000269" key="24">
    <source>
    </source>
</evidence>
<evidence type="ECO:0000269" key="25">
    <source>
    </source>
</evidence>
<evidence type="ECO:0000269" key="26">
    <source>
    </source>
</evidence>
<evidence type="ECO:0000269" key="27">
    <source>
    </source>
</evidence>
<evidence type="ECO:0000269" key="28">
    <source>
    </source>
</evidence>
<evidence type="ECO:0000269" key="29">
    <source>
    </source>
</evidence>
<evidence type="ECO:0000269" key="30">
    <source>
    </source>
</evidence>
<evidence type="ECO:0000269" key="31">
    <source>
    </source>
</evidence>
<evidence type="ECO:0000269" key="32">
    <source>
    </source>
</evidence>
<evidence type="ECO:0000269" key="33">
    <source>
    </source>
</evidence>
<evidence type="ECO:0000269" key="34">
    <source>
    </source>
</evidence>
<evidence type="ECO:0000269" key="35">
    <source>
    </source>
</evidence>
<evidence type="ECO:0000269" key="36">
    <source>
    </source>
</evidence>
<evidence type="ECO:0000269" key="37">
    <source>
    </source>
</evidence>
<evidence type="ECO:0000269" key="38">
    <source>
    </source>
</evidence>
<evidence type="ECO:0000269" key="39">
    <source>
    </source>
</evidence>
<evidence type="ECO:0000269" key="40">
    <source>
    </source>
</evidence>
<evidence type="ECO:0000269" key="41">
    <source>
    </source>
</evidence>
<evidence type="ECO:0000269" key="42">
    <source>
    </source>
</evidence>
<evidence type="ECO:0000269" key="43">
    <source>
    </source>
</evidence>
<evidence type="ECO:0000269" key="44">
    <source>
    </source>
</evidence>
<evidence type="ECO:0000269" key="45">
    <source>
    </source>
</evidence>
<evidence type="ECO:0000269" key="46">
    <source>
    </source>
</evidence>
<evidence type="ECO:0000269" key="47">
    <source>
    </source>
</evidence>
<evidence type="ECO:0000269" key="48">
    <source>
    </source>
</evidence>
<evidence type="ECO:0000269" key="49">
    <source>
    </source>
</evidence>
<evidence type="ECO:0000269" key="50">
    <source>
    </source>
</evidence>
<evidence type="ECO:0000269" key="51">
    <source>
    </source>
</evidence>
<evidence type="ECO:0000269" key="52">
    <source>
    </source>
</evidence>
<evidence type="ECO:0000269" key="53">
    <source>
    </source>
</evidence>
<evidence type="ECO:0000269" key="54">
    <source>
    </source>
</evidence>
<evidence type="ECO:0000269" key="55">
    <source>
    </source>
</evidence>
<evidence type="ECO:0000269" key="56">
    <source>
    </source>
</evidence>
<evidence type="ECO:0000269" key="57">
    <source>
    </source>
</evidence>
<evidence type="ECO:0000269" key="58">
    <source>
    </source>
</evidence>
<evidence type="ECO:0000269" key="59">
    <source ref="5"/>
</evidence>
<evidence type="ECO:0000305" key="60"/>
<evidence type="ECO:0000312" key="61">
    <source>
        <dbReference type="HGNC" id="HGNC:11027"/>
    </source>
</evidence>
<evidence type="ECO:0007744" key="62">
    <source>
        <dbReference type="PDB" id="1BH7"/>
    </source>
</evidence>
<evidence type="ECO:0007744" key="63">
    <source>
        <dbReference type="PDB" id="1BNX"/>
    </source>
</evidence>
<evidence type="ECO:0007744" key="64">
    <source>
        <dbReference type="PDB" id="1BTQ"/>
    </source>
</evidence>
<evidence type="ECO:0007744" key="65">
    <source>
        <dbReference type="PDB" id="1BTR"/>
    </source>
</evidence>
<evidence type="ECO:0007744" key="66">
    <source>
        <dbReference type="PDB" id="1BTS"/>
    </source>
</evidence>
<evidence type="ECO:0007744" key="67">
    <source>
        <dbReference type="PDB" id="1BTT"/>
    </source>
</evidence>
<evidence type="ECO:0007744" key="68">
    <source>
        <dbReference type="PDB" id="1HYN"/>
    </source>
</evidence>
<evidence type="ECO:0007744" key="69">
    <source>
        <dbReference type="PDB" id="2BTA"/>
    </source>
</evidence>
<evidence type="ECO:0007744" key="70">
    <source>
        <dbReference type="PDB" id="2BTB"/>
    </source>
</evidence>
<evidence type="ECO:0007744" key="71">
    <source>
        <dbReference type="PDB" id="3BTB"/>
    </source>
</evidence>
<evidence type="ECO:0007744" key="72">
    <source>
        <dbReference type="PDB" id="4KY9"/>
    </source>
</evidence>
<evidence type="ECO:0007744" key="73">
    <source>
        <dbReference type="PDB" id="4YZF"/>
    </source>
</evidence>
<evidence type="ECO:0007829" key="74">
    <source>
        <dbReference type="PDB" id="1HYN"/>
    </source>
</evidence>
<evidence type="ECO:0007829" key="75">
    <source>
        <dbReference type="PDB" id="4KY9"/>
    </source>
</evidence>
<evidence type="ECO:0007829" key="76">
    <source>
        <dbReference type="PDB" id="7TY4"/>
    </source>
</evidence>
<evidence type="ECO:0007829" key="77">
    <source>
        <dbReference type="PDB" id="7TY8"/>
    </source>
</evidence>
<evidence type="ECO:0007829" key="78">
    <source>
        <dbReference type="PDB" id="7UZ3"/>
    </source>
</evidence>
<evidence type="ECO:0007829" key="79">
    <source>
        <dbReference type="PDB" id="7UZU"/>
    </source>
</evidence>
<evidence type="ECO:0007829" key="80">
    <source>
        <dbReference type="PDB" id="7UZV"/>
    </source>
</evidence>
<evidence type="ECO:0007829" key="81">
    <source>
        <dbReference type="PDB" id="8T3U"/>
    </source>
</evidence>
<evidence type="ECO:0007829" key="82">
    <source>
        <dbReference type="PDB" id="8T47"/>
    </source>
</evidence>
<dbReference type="EMBL" id="X12609">
    <property type="protein sequence ID" value="CAA31128.1"/>
    <property type="molecule type" value="mRNA"/>
</dbReference>
<dbReference type="EMBL" id="M27819">
    <property type="protein sequence ID" value="AAA35514.1"/>
    <property type="molecule type" value="mRNA"/>
</dbReference>
<dbReference type="EMBL" id="DQ419529">
    <property type="protein sequence ID" value="ABD74692.1"/>
    <property type="molecule type" value="mRNA"/>
</dbReference>
<dbReference type="EMBL" id="GQ981383">
    <property type="protein sequence ID" value="ADN39420.1"/>
    <property type="molecule type" value="mRNA"/>
</dbReference>
<dbReference type="EMBL" id="GQ981384">
    <property type="protein sequence ID" value="ADN39421.1"/>
    <property type="molecule type" value="mRNA"/>
</dbReference>
<dbReference type="EMBL" id="DQ072115">
    <property type="protein sequence ID" value="AAY57324.1"/>
    <property type="molecule type" value="Genomic_DNA"/>
</dbReference>
<dbReference type="EMBL" id="CH471178">
    <property type="protein sequence ID" value="EAW51614.1"/>
    <property type="molecule type" value="Genomic_DNA"/>
</dbReference>
<dbReference type="EMBL" id="BC096106">
    <property type="protein sequence ID" value="AAH96106.1"/>
    <property type="molecule type" value="mRNA"/>
</dbReference>
<dbReference type="EMBL" id="BC096107">
    <property type="protein sequence ID" value="AAH96107.1"/>
    <property type="molecule type" value="mRNA"/>
</dbReference>
<dbReference type="EMBL" id="BC099628">
    <property type="protein sequence ID" value="AAH99628.1"/>
    <property type="molecule type" value="mRNA"/>
</dbReference>
<dbReference type="EMBL" id="BC099629">
    <property type="protein sequence ID" value="AAH99629.1"/>
    <property type="molecule type" value="mRNA"/>
</dbReference>
<dbReference type="EMBL" id="BC101570">
    <property type="protein sequence ID" value="AAI01571.1"/>
    <property type="molecule type" value="mRNA"/>
</dbReference>
<dbReference type="EMBL" id="BC101574">
    <property type="protein sequence ID" value="AAI01575.1"/>
    <property type="molecule type" value="mRNA"/>
</dbReference>
<dbReference type="EMBL" id="S68680">
    <property type="protein sequence ID" value="AAC60608.2"/>
    <property type="molecule type" value="mRNA"/>
</dbReference>
<dbReference type="CCDS" id="CCDS11481.1">
    <molecule id="P02730-1"/>
</dbReference>
<dbReference type="PIR" id="A36218">
    <property type="entry name" value="B3HU"/>
</dbReference>
<dbReference type="RefSeq" id="NP_000333.1">
    <molecule id="P02730-1"/>
    <property type="nucleotide sequence ID" value="NM_000342.4"/>
</dbReference>
<dbReference type="RefSeq" id="XP_005257650.1">
    <molecule id="P02730-2"/>
    <property type="nucleotide sequence ID" value="XM_005257593.6"/>
</dbReference>
<dbReference type="RefSeq" id="XP_054172925.1">
    <molecule id="P02730-2"/>
    <property type="nucleotide sequence ID" value="XM_054316950.1"/>
</dbReference>
<dbReference type="PDB" id="1BH7">
    <property type="method" value="NMR"/>
    <property type="chains" value="A=803-835"/>
</dbReference>
<dbReference type="PDB" id="1BNX">
    <property type="method" value="NMR"/>
    <property type="chains" value="A=389-430"/>
</dbReference>
<dbReference type="PDB" id="1BTQ">
    <property type="method" value="NMR"/>
    <property type="chains" value="A=405-424"/>
</dbReference>
<dbReference type="PDB" id="1BTR">
    <property type="method" value="NMR"/>
    <property type="chains" value="A=405-424"/>
</dbReference>
<dbReference type="PDB" id="1BTS">
    <property type="method" value="NMR"/>
    <property type="chains" value="A=436-456"/>
</dbReference>
<dbReference type="PDB" id="1BTT">
    <property type="method" value="NMR"/>
    <property type="chains" value="A=436-456"/>
</dbReference>
<dbReference type="PDB" id="1BZK">
    <property type="method" value="NMR"/>
    <property type="chains" value="A=389-430"/>
</dbReference>
<dbReference type="PDB" id="1HYN">
    <property type="method" value="X-ray"/>
    <property type="resolution" value="2.60 A"/>
    <property type="chains" value="P/Q/R/S=1-379"/>
</dbReference>
<dbReference type="PDB" id="2BTA">
    <property type="method" value="NMR"/>
    <property type="chains" value="A=1-15"/>
</dbReference>
<dbReference type="PDB" id="2BTB">
    <property type="method" value="NMR"/>
    <property type="chains" value="A=1-15"/>
</dbReference>
<dbReference type="PDB" id="3BTB">
    <property type="method" value="NMR"/>
    <property type="chains" value="A=1-15"/>
</dbReference>
<dbReference type="PDB" id="4KY9">
    <property type="method" value="X-ray"/>
    <property type="resolution" value="2.23 A"/>
    <property type="chains" value="A/P=51-356"/>
</dbReference>
<dbReference type="PDB" id="4YZF">
    <property type="method" value="X-ray"/>
    <property type="resolution" value="3.50 A"/>
    <property type="chains" value="A/B/C/D=1-911"/>
</dbReference>
<dbReference type="PDB" id="7TVZ">
    <property type="method" value="EM"/>
    <property type="resolution" value="3.60 A"/>
    <property type="chains" value="A/B=1-911"/>
</dbReference>
<dbReference type="PDB" id="7TW0">
    <property type="method" value="EM"/>
    <property type="resolution" value="4.60 A"/>
    <property type="chains" value="A/B=1-911"/>
</dbReference>
<dbReference type="PDB" id="7TW1">
    <property type="method" value="EM"/>
    <property type="resolution" value="4.60 A"/>
    <property type="chains" value="A/B=1-911"/>
</dbReference>
<dbReference type="PDB" id="7TW2">
    <property type="method" value="EM"/>
    <property type="resolution" value="4.80 A"/>
    <property type="chains" value="A/B=1-911"/>
</dbReference>
<dbReference type="PDB" id="7TW3">
    <property type="method" value="EM"/>
    <property type="resolution" value="4.40 A"/>
    <property type="chains" value="A/B=1-911"/>
</dbReference>
<dbReference type="PDB" id="7TW5">
    <property type="method" value="EM"/>
    <property type="resolution" value="5.70 A"/>
    <property type="chains" value="A/B=1-911"/>
</dbReference>
<dbReference type="PDB" id="7TW6">
    <property type="method" value="EM"/>
    <property type="resolution" value="5.60 A"/>
    <property type="chains" value="A/B/J/K=1-911"/>
</dbReference>
<dbReference type="PDB" id="7TY4">
    <property type="method" value="EM"/>
    <property type="resolution" value="2.99 A"/>
    <property type="chains" value="A/B=1-911"/>
</dbReference>
<dbReference type="PDB" id="7TY6">
    <property type="method" value="EM"/>
    <property type="resolution" value="2.98 A"/>
    <property type="chains" value="A/B=1-911"/>
</dbReference>
<dbReference type="PDB" id="7TY7">
    <property type="method" value="EM"/>
    <property type="resolution" value="3.37 A"/>
    <property type="chains" value="A/B=1-911"/>
</dbReference>
<dbReference type="PDB" id="7TY8">
    <property type="method" value="EM"/>
    <property type="resolution" value="3.18 A"/>
    <property type="chains" value="A/B=1-911"/>
</dbReference>
<dbReference type="PDB" id="7TYA">
    <property type="method" value="EM"/>
    <property type="resolution" value="3.07 A"/>
    <property type="chains" value="A/B=1-911"/>
</dbReference>
<dbReference type="PDB" id="7UZ3">
    <property type="method" value="EM"/>
    <property type="resolution" value="2.35 A"/>
    <property type="chains" value="C/E=1-911"/>
</dbReference>
<dbReference type="PDB" id="7UZU">
    <property type="method" value="EM"/>
    <property type="resolution" value="2.30 A"/>
    <property type="chains" value="W=1-911"/>
</dbReference>
<dbReference type="PDB" id="7UZV">
    <property type="method" value="EM"/>
    <property type="resolution" value="2.50 A"/>
    <property type="chains" value="C/E=1-911"/>
</dbReference>
<dbReference type="PDB" id="7V07">
    <property type="method" value="EM"/>
    <property type="resolution" value="2.80 A"/>
    <property type="chains" value="C/E=1-911"/>
</dbReference>
<dbReference type="PDB" id="7V0K">
    <property type="method" value="EM"/>
    <property type="resolution" value="2.40 A"/>
    <property type="chains" value="O/P/W=1-911"/>
</dbReference>
<dbReference type="PDB" id="7V0M">
    <property type="method" value="EM"/>
    <property type="resolution" value="2.70 A"/>
    <property type="chains" value="W=1-911"/>
</dbReference>
<dbReference type="PDB" id="7V0T">
    <property type="method" value="EM"/>
    <property type="resolution" value="2.70 A"/>
    <property type="chains" value="C/E=1-911"/>
</dbReference>
<dbReference type="PDB" id="7V0U">
    <property type="method" value="EM"/>
    <property type="resolution" value="3.00 A"/>
    <property type="chains" value="D/F=1-911"/>
</dbReference>
<dbReference type="PDB" id="7V0Y">
    <property type="method" value="EM"/>
    <property type="resolution" value="3.00 A"/>
    <property type="chains" value="C/E=1-911"/>
</dbReference>
<dbReference type="PDB" id="7V19">
    <property type="method" value="EM"/>
    <property type="resolution" value="3.30 A"/>
    <property type="chains" value="C/E=1-911"/>
</dbReference>
<dbReference type="PDB" id="8CRQ">
    <property type="method" value="EM"/>
    <property type="resolution" value="3.20 A"/>
    <property type="chains" value="C/E=1-911"/>
</dbReference>
<dbReference type="PDB" id="8CRR">
    <property type="method" value="EM"/>
    <property type="resolution" value="3.00 A"/>
    <property type="chains" value="C/E=1-911"/>
</dbReference>
<dbReference type="PDB" id="8CRT">
    <property type="method" value="EM"/>
    <property type="resolution" value="3.00 A"/>
    <property type="chains" value="C/E=1-911"/>
</dbReference>
<dbReference type="PDB" id="8CS9">
    <property type="method" value="EM"/>
    <property type="resolution" value="2.74 A"/>
    <property type="chains" value="V/Y/Z/e/f/g=1-911"/>
</dbReference>
<dbReference type="PDB" id="8CSL">
    <property type="method" value="EM"/>
    <property type="resolution" value="25.00 A"/>
    <property type="chains" value="V/W/Y/Z/e/f/g=1-911"/>
</dbReference>
<dbReference type="PDB" id="8CSV">
    <property type="method" value="EM"/>
    <property type="resolution" value="2.70 A"/>
    <property type="chains" value="W=1-911"/>
</dbReference>
<dbReference type="PDB" id="8CSY">
    <property type="method" value="EM"/>
    <property type="resolution" value="2.70 A"/>
    <property type="chains" value="C/E=1-911"/>
</dbReference>
<dbReference type="PDB" id="8CT3">
    <property type="method" value="EM"/>
    <property type="resolution" value="3.30 A"/>
    <property type="chains" value="C/E=1-911"/>
</dbReference>
<dbReference type="PDB" id="8CTE">
    <property type="method" value="EM"/>
    <property type="resolution" value="2.90 A"/>
    <property type="chains" value="P/T/W=1-911"/>
</dbReference>
<dbReference type="PDB" id="8T3R">
    <property type="method" value="EM"/>
    <property type="resolution" value="2.99 A"/>
    <property type="chains" value="A/B=1-911"/>
</dbReference>
<dbReference type="PDB" id="8T3U">
    <property type="method" value="EM"/>
    <property type="resolution" value="2.97 A"/>
    <property type="chains" value="A/B=1-911"/>
</dbReference>
<dbReference type="PDB" id="8T44">
    <property type="method" value="EM"/>
    <property type="resolution" value="3.12 A"/>
    <property type="chains" value="A/B=1-911"/>
</dbReference>
<dbReference type="PDB" id="8T45">
    <property type="method" value="EM"/>
    <property type="resolution" value="2.99 A"/>
    <property type="chains" value="A/B=1-911"/>
</dbReference>
<dbReference type="PDB" id="8T47">
    <property type="method" value="EM"/>
    <property type="resolution" value="3.16 A"/>
    <property type="chains" value="A/B=1-911"/>
</dbReference>
<dbReference type="PDB" id="8T6U">
    <property type="method" value="EM"/>
    <property type="resolution" value="3.13 A"/>
    <property type="chains" value="A/B=369-891"/>
</dbReference>
<dbReference type="PDB" id="8T6V">
    <property type="method" value="EM"/>
    <property type="resolution" value="2.95 A"/>
    <property type="chains" value="A/B=369-891"/>
</dbReference>
<dbReference type="PDBsum" id="1BH7"/>
<dbReference type="PDBsum" id="1BNX"/>
<dbReference type="PDBsum" id="1BTQ"/>
<dbReference type="PDBsum" id="1BTR"/>
<dbReference type="PDBsum" id="1BTS"/>
<dbReference type="PDBsum" id="1BTT"/>
<dbReference type="PDBsum" id="1BZK"/>
<dbReference type="PDBsum" id="1HYN"/>
<dbReference type="PDBsum" id="2BTA"/>
<dbReference type="PDBsum" id="2BTB"/>
<dbReference type="PDBsum" id="3BTB"/>
<dbReference type="PDBsum" id="4KY9"/>
<dbReference type="PDBsum" id="4YZF"/>
<dbReference type="PDBsum" id="7TVZ"/>
<dbReference type="PDBsum" id="7TW0"/>
<dbReference type="PDBsum" id="7TW1"/>
<dbReference type="PDBsum" id="7TW2"/>
<dbReference type="PDBsum" id="7TW3"/>
<dbReference type="PDBsum" id="7TW5"/>
<dbReference type="PDBsum" id="7TW6"/>
<dbReference type="PDBsum" id="7TY4"/>
<dbReference type="PDBsum" id="7TY6"/>
<dbReference type="PDBsum" id="7TY7"/>
<dbReference type="PDBsum" id="7TY8"/>
<dbReference type="PDBsum" id="7TYA"/>
<dbReference type="PDBsum" id="7UZ3"/>
<dbReference type="PDBsum" id="7UZU"/>
<dbReference type="PDBsum" id="7UZV"/>
<dbReference type="PDBsum" id="7V07"/>
<dbReference type="PDBsum" id="7V0K"/>
<dbReference type="PDBsum" id="7V0M"/>
<dbReference type="PDBsum" id="7V0T"/>
<dbReference type="PDBsum" id="7V0U"/>
<dbReference type="PDBsum" id="7V0Y"/>
<dbReference type="PDBsum" id="7V19"/>
<dbReference type="PDBsum" id="8CRQ"/>
<dbReference type="PDBsum" id="8CRR"/>
<dbReference type="PDBsum" id="8CRT"/>
<dbReference type="PDBsum" id="8CS9"/>
<dbReference type="PDBsum" id="8CSL"/>
<dbReference type="PDBsum" id="8CSV"/>
<dbReference type="PDBsum" id="8CSY"/>
<dbReference type="PDBsum" id="8CT3"/>
<dbReference type="PDBsum" id="8CTE"/>
<dbReference type="PDBsum" id="8T3R"/>
<dbReference type="PDBsum" id="8T3U"/>
<dbReference type="PDBsum" id="8T44"/>
<dbReference type="PDBsum" id="8T45"/>
<dbReference type="PDBsum" id="8T47"/>
<dbReference type="PDBsum" id="8T6U"/>
<dbReference type="PDBsum" id="8T6V"/>
<dbReference type="EMDB" id="EMD-26142"/>
<dbReference type="EMDB" id="EMD-26146"/>
<dbReference type="EMDB" id="EMD-26147"/>
<dbReference type="EMDB" id="EMD-26148"/>
<dbReference type="EMDB" id="EMD-26149"/>
<dbReference type="EMDB" id="EMD-26151"/>
<dbReference type="EMDB" id="EMD-26153"/>
<dbReference type="EMDB" id="EMD-26165"/>
<dbReference type="EMDB" id="EMD-26167"/>
<dbReference type="EMDB" id="EMD-26168"/>
<dbReference type="EMDB" id="EMD-26169"/>
<dbReference type="EMDB" id="EMD-26171"/>
<dbReference type="EMDB" id="EMD-26874"/>
<dbReference type="EMDB" id="EMD-26918"/>
<dbReference type="EMDB" id="EMD-26919"/>
<dbReference type="EMDB" id="EMD-26940"/>
<dbReference type="EMDB" id="EMD-26943"/>
<dbReference type="EMDB" id="EMD-26944"/>
<dbReference type="EMDB" id="EMD-26950"/>
<dbReference type="EMDB" id="EMD-26951"/>
<dbReference type="EMDB" id="EMD-26953"/>
<dbReference type="EMDB" id="EMD-26954"/>
<dbReference type="EMDB" id="EMD-26955"/>
<dbReference type="EMDB" id="EMD-26956"/>
<dbReference type="EMDB" id="EMD-26958"/>
<dbReference type="EMDB" id="EMD-26960"/>
<dbReference type="EMDB" id="EMD-26965"/>
<dbReference type="EMDB" id="EMD-26972"/>
<dbReference type="EMDB" id="EMD-26975"/>
<dbReference type="EMDB" id="EMD-26979"/>
<dbReference type="EMDB" id="EMD-26988"/>
<dbReference type="EMDB" id="EMD-41009"/>
<dbReference type="EMDB" id="EMD-41012"/>
<dbReference type="EMDB" id="EMD-41019"/>
<dbReference type="EMDB" id="EMD-41020"/>
<dbReference type="EMDB" id="EMD-41023"/>
<dbReference type="EMDB" id="EMD-41081"/>
<dbReference type="EMDB" id="EMD-41082"/>
<dbReference type="SMR" id="P02730"/>
<dbReference type="BioGRID" id="112412">
    <property type="interactions" value="23"/>
</dbReference>
<dbReference type="CORUM" id="P02730"/>
<dbReference type="DIP" id="DIP-42428N"/>
<dbReference type="ELM" id="P02730"/>
<dbReference type="FunCoup" id="P02730">
    <property type="interactions" value="312"/>
</dbReference>
<dbReference type="IntAct" id="P02730">
    <property type="interactions" value="29"/>
</dbReference>
<dbReference type="MINT" id="P02730"/>
<dbReference type="STRING" id="9606.ENSP00000262418"/>
<dbReference type="MoonDB" id="P02730">
    <property type="type" value="Curated"/>
</dbReference>
<dbReference type="MoonProt" id="P02730"/>
<dbReference type="TCDB" id="2.A.31.1.1">
    <property type="family name" value="the anion exchanger (ae) family"/>
</dbReference>
<dbReference type="GlyConnect" id="1024">
    <property type="glycosylation" value="1 N-Linked glycan (1 site), 1 O-GlcNAc glycan (3 sites)"/>
</dbReference>
<dbReference type="GlyCosmos" id="P02730">
    <property type="glycosylation" value="4 sites, 2 glycans"/>
</dbReference>
<dbReference type="GlyGen" id="P02730">
    <property type="glycosylation" value="12 sites, 49 N-linked glycans (1 site), 1 O-linked glycan (3 sites)"/>
</dbReference>
<dbReference type="iPTMnet" id="P02730"/>
<dbReference type="PhosphoSitePlus" id="P02730"/>
<dbReference type="SwissPalm" id="P02730"/>
<dbReference type="BioMuta" id="SLC4A1"/>
<dbReference type="DMDM" id="114787"/>
<dbReference type="jPOST" id="P02730"/>
<dbReference type="MassIVE" id="P02730"/>
<dbReference type="PaxDb" id="9606-ENSP00000262418"/>
<dbReference type="PeptideAtlas" id="P02730"/>
<dbReference type="ProteomicsDB" id="51557"/>
<dbReference type="ABCD" id="P02730">
    <property type="antibodies" value="36 sequenced antibodies"/>
</dbReference>
<dbReference type="Antibodypedia" id="2977">
    <property type="antibodies" value="357 antibodies from 36 providers"/>
</dbReference>
<dbReference type="DNASU" id="6521"/>
<dbReference type="Ensembl" id="ENST00000262418.12">
    <molecule id="P02730-1"/>
    <property type="protein sequence ID" value="ENSP00000262418.6"/>
    <property type="gene ID" value="ENSG00000004939.16"/>
</dbReference>
<dbReference type="GeneID" id="6521"/>
<dbReference type="KEGG" id="hsa:6521"/>
<dbReference type="MANE-Select" id="ENST00000262418.12">
    <property type="protein sequence ID" value="ENSP00000262418.6"/>
    <property type="RefSeq nucleotide sequence ID" value="NM_000342.4"/>
    <property type="RefSeq protein sequence ID" value="NP_000333.1"/>
</dbReference>
<dbReference type="UCSC" id="uc002igf.5">
    <molecule id="P02730-1"/>
    <property type="organism name" value="human"/>
</dbReference>
<dbReference type="AGR" id="HGNC:11027"/>
<dbReference type="CTD" id="6521"/>
<dbReference type="DisGeNET" id="6521"/>
<dbReference type="GeneCards" id="SLC4A1"/>
<dbReference type="GeneReviews" id="SLC4A1"/>
<dbReference type="HGNC" id="HGNC:11027">
    <property type="gene designation" value="SLC4A1"/>
</dbReference>
<dbReference type="HPA" id="ENSG00000004939">
    <property type="expression patterns" value="Tissue enriched (bone)"/>
</dbReference>
<dbReference type="MalaCards" id="SLC4A1"/>
<dbReference type="MIM" id="109270">
    <property type="type" value="gene+phenotype"/>
</dbReference>
<dbReference type="MIM" id="110500">
    <property type="type" value="phenotype"/>
</dbReference>
<dbReference type="MIM" id="112010">
    <property type="type" value="phenotype"/>
</dbReference>
<dbReference type="MIM" id="112050">
    <property type="type" value="phenotype"/>
</dbReference>
<dbReference type="MIM" id="130600">
    <property type="type" value="phenotype"/>
</dbReference>
<dbReference type="MIM" id="166900">
    <property type="type" value="phenotype"/>
</dbReference>
<dbReference type="MIM" id="179800">
    <property type="type" value="phenotype"/>
</dbReference>
<dbReference type="MIM" id="185020">
    <property type="type" value="phenotype"/>
</dbReference>
<dbReference type="MIM" id="601550">
    <property type="type" value="phenotype"/>
</dbReference>
<dbReference type="MIM" id="601551">
    <property type="type" value="phenotype"/>
</dbReference>
<dbReference type="MIM" id="611162">
    <property type="type" value="phenotype"/>
</dbReference>
<dbReference type="MIM" id="611590">
    <property type="type" value="phenotype"/>
</dbReference>
<dbReference type="MIM" id="612653">
    <property type="type" value="phenotype"/>
</dbReference>
<dbReference type="neXtProt" id="NX_P02730"/>
<dbReference type="OpenTargets" id="ENSG00000004939"/>
<dbReference type="Orphanet" id="93608">
    <property type="disease" value="Autosomal dominant distal renal tubular acidosis"/>
</dbReference>
<dbReference type="Orphanet" id="3202">
    <property type="disease" value="Dehydrated hereditary stomatocytosis"/>
</dbReference>
<dbReference type="Orphanet" id="93610">
    <property type="disease" value="Distal renal tubular acidosis with anemia"/>
</dbReference>
<dbReference type="Orphanet" id="398088">
    <property type="disease" value="Hereditary cryohydrocytosis with normal stomatin"/>
</dbReference>
<dbReference type="Orphanet" id="822">
    <property type="disease" value="Hereditary spherocytosis"/>
</dbReference>
<dbReference type="Orphanet" id="98868">
    <property type="disease" value="Southeast Asian ovalocytosis"/>
</dbReference>
<dbReference type="PharmGKB" id="PA35895"/>
<dbReference type="VEuPathDB" id="HostDB:ENSG00000004939"/>
<dbReference type="eggNOG" id="KOG1172">
    <property type="taxonomic scope" value="Eukaryota"/>
</dbReference>
<dbReference type="GeneTree" id="ENSGT00940000157423"/>
<dbReference type="HOGENOM" id="CLU_002289_1_0_1"/>
<dbReference type="InParanoid" id="P02730"/>
<dbReference type="OMA" id="YSHFPIW"/>
<dbReference type="OrthoDB" id="1735926at2759"/>
<dbReference type="PAN-GO" id="P02730">
    <property type="GO annotations" value="7 GO annotations based on evolutionary models"/>
</dbReference>
<dbReference type="PhylomeDB" id="P02730"/>
<dbReference type="TreeFam" id="TF313630"/>
<dbReference type="PathwayCommons" id="P02730"/>
<dbReference type="Reactome" id="R-HSA-1237044">
    <property type="pathway name" value="Erythrocytes take up carbon dioxide and release oxygen"/>
</dbReference>
<dbReference type="Reactome" id="R-HSA-1247673">
    <property type="pathway name" value="Erythrocytes take up oxygen and release carbon dioxide"/>
</dbReference>
<dbReference type="Reactome" id="R-HSA-425381">
    <property type="pathway name" value="Bicarbonate transporters"/>
</dbReference>
<dbReference type="Reactome" id="R-HSA-5619050">
    <property type="pathway name" value="Defective SLC4A1 causes hereditary spherocytosis type 4 (HSP4), distal renal tubular acidosis (dRTA) and dRTA with hemolytic anemia (dRTA-HA)"/>
</dbReference>
<dbReference type="SignaLink" id="P02730"/>
<dbReference type="SIGNOR" id="P02730"/>
<dbReference type="BioGRID-ORCS" id="6521">
    <property type="hits" value="37 hits in 1164 CRISPR screens"/>
</dbReference>
<dbReference type="CD-CODE" id="FB4E32DD">
    <property type="entry name" value="Presynaptic clusters and postsynaptic densities"/>
</dbReference>
<dbReference type="ChiTaRS" id="SLC4A1">
    <property type="organism name" value="human"/>
</dbReference>
<dbReference type="EvolutionaryTrace" id="P02730"/>
<dbReference type="GeneWiki" id="Band_3"/>
<dbReference type="GenomeRNAi" id="6521"/>
<dbReference type="Pharos" id="P02730">
    <property type="development level" value="Tbio"/>
</dbReference>
<dbReference type="PRO" id="PR:P02730"/>
<dbReference type="Proteomes" id="UP000005640">
    <property type="component" value="Chromosome 17"/>
</dbReference>
<dbReference type="RNAct" id="P02730">
    <property type="molecule type" value="protein"/>
</dbReference>
<dbReference type="Bgee" id="ENSG00000004939">
    <property type="expression patterns" value="Expressed in trabecular bone tissue and 140 other cell types or tissues"/>
</dbReference>
<dbReference type="ExpressionAtlas" id="P02730">
    <property type="expression patterns" value="baseline and differential"/>
</dbReference>
<dbReference type="GO" id="GO:0170014">
    <property type="term" value="C:ankyrin-1 complex"/>
    <property type="evidence" value="ECO:0000314"/>
    <property type="project" value="UniProtKB"/>
</dbReference>
<dbReference type="GO" id="GO:0016323">
    <property type="term" value="C:basolateral plasma membrane"/>
    <property type="evidence" value="ECO:0000314"/>
    <property type="project" value="UniProtKB"/>
</dbReference>
<dbReference type="GO" id="GO:0072562">
    <property type="term" value="C:blood microparticle"/>
    <property type="evidence" value="ECO:0007005"/>
    <property type="project" value="UniProtKB"/>
</dbReference>
<dbReference type="GO" id="GO:0030863">
    <property type="term" value="C:cortical cytoskeleton"/>
    <property type="evidence" value="ECO:0000314"/>
    <property type="project" value="UniProtKB"/>
</dbReference>
<dbReference type="GO" id="GO:0009898">
    <property type="term" value="C:cytoplasmic side of plasma membrane"/>
    <property type="evidence" value="ECO:0007669"/>
    <property type="project" value="Ensembl"/>
</dbReference>
<dbReference type="GO" id="GO:0070062">
    <property type="term" value="C:extracellular exosome"/>
    <property type="evidence" value="ECO:0007005"/>
    <property type="project" value="UniProtKB"/>
</dbReference>
<dbReference type="GO" id="GO:0016020">
    <property type="term" value="C:membrane"/>
    <property type="evidence" value="ECO:0000303"/>
    <property type="project" value="UniProtKB"/>
</dbReference>
<dbReference type="GO" id="GO:0005886">
    <property type="term" value="C:plasma membrane"/>
    <property type="evidence" value="ECO:0000314"/>
    <property type="project" value="UniProtKB"/>
</dbReference>
<dbReference type="GO" id="GO:0030018">
    <property type="term" value="C:Z disc"/>
    <property type="evidence" value="ECO:0000250"/>
    <property type="project" value="UniProtKB"/>
</dbReference>
<dbReference type="GO" id="GO:0030506">
    <property type="term" value="F:ankyrin binding"/>
    <property type="evidence" value="ECO:0000353"/>
    <property type="project" value="BHF-UCL"/>
</dbReference>
<dbReference type="GO" id="GO:0015106">
    <property type="term" value="F:bicarbonate transmembrane transporter activity"/>
    <property type="evidence" value="ECO:0000314"/>
    <property type="project" value="UniProtKB"/>
</dbReference>
<dbReference type="GO" id="GO:0015108">
    <property type="term" value="F:chloride transmembrane transporter activity"/>
    <property type="evidence" value="ECO:0000250"/>
    <property type="project" value="UniProtKB"/>
</dbReference>
<dbReference type="GO" id="GO:0140900">
    <property type="term" value="F:chloride:bicarbonate antiporter activity"/>
    <property type="evidence" value="ECO:0000314"/>
    <property type="project" value="UniProtKB"/>
</dbReference>
<dbReference type="GO" id="GO:0030492">
    <property type="term" value="F:hemoglobin binding"/>
    <property type="evidence" value="ECO:0007669"/>
    <property type="project" value="Ensembl"/>
</dbReference>
<dbReference type="GO" id="GO:0008509">
    <property type="term" value="F:monoatomic anion transmembrane transporter activity"/>
    <property type="evidence" value="ECO:0000304"/>
    <property type="project" value="ProtInc"/>
</dbReference>
<dbReference type="GO" id="GO:0042803">
    <property type="term" value="F:protein homodimerization activity"/>
    <property type="evidence" value="ECO:0000353"/>
    <property type="project" value="BHF-UCL"/>
</dbReference>
<dbReference type="GO" id="GO:0043495">
    <property type="term" value="F:protein-membrane adaptor activity"/>
    <property type="evidence" value="ECO:0000304"/>
    <property type="project" value="BHF-UCL"/>
</dbReference>
<dbReference type="GO" id="GO:0005452">
    <property type="term" value="F:solute:inorganic anion antiporter activity"/>
    <property type="evidence" value="ECO:0000314"/>
    <property type="project" value="UniProtKB"/>
</dbReference>
<dbReference type="GO" id="GO:0015701">
    <property type="term" value="P:bicarbonate transport"/>
    <property type="evidence" value="ECO:0000314"/>
    <property type="project" value="UniProtKB"/>
</dbReference>
<dbReference type="GO" id="GO:0007596">
    <property type="term" value="P:blood coagulation"/>
    <property type="evidence" value="ECO:0007669"/>
    <property type="project" value="Ensembl"/>
</dbReference>
<dbReference type="GO" id="GO:1902476">
    <property type="term" value="P:chloride transmembrane transport"/>
    <property type="evidence" value="ECO:0000314"/>
    <property type="project" value="UniProtKB"/>
</dbReference>
<dbReference type="GO" id="GO:0006821">
    <property type="term" value="P:chloride transport"/>
    <property type="evidence" value="ECO:0000250"/>
    <property type="project" value="UniProtKB"/>
</dbReference>
<dbReference type="GO" id="GO:0048821">
    <property type="term" value="P:erythrocyte development"/>
    <property type="evidence" value="ECO:0007669"/>
    <property type="project" value="Ensembl"/>
</dbReference>
<dbReference type="GO" id="GO:0006873">
    <property type="term" value="P:intracellular monoatomic ion homeostasis"/>
    <property type="evidence" value="ECO:0000304"/>
    <property type="project" value="ProtInc"/>
</dbReference>
<dbReference type="GO" id="GO:0006820">
    <property type="term" value="P:monoatomic anion transport"/>
    <property type="evidence" value="ECO:0000304"/>
    <property type="project" value="ProtInc"/>
</dbReference>
<dbReference type="GO" id="GO:1904539">
    <property type="term" value="P:negative regulation of glycolytic process through fructose-6-phosphate"/>
    <property type="evidence" value="ECO:0007669"/>
    <property type="project" value="Ensembl"/>
</dbReference>
<dbReference type="GO" id="GO:0035811">
    <property type="term" value="P:negative regulation of urine volume"/>
    <property type="evidence" value="ECO:0007669"/>
    <property type="project" value="Ensembl"/>
</dbReference>
<dbReference type="GO" id="GO:0045852">
    <property type="term" value="P:pH elevation"/>
    <property type="evidence" value="ECO:0007669"/>
    <property type="project" value="Ensembl"/>
</dbReference>
<dbReference type="GO" id="GO:0017121">
    <property type="term" value="P:plasma membrane phospholipid scrambling"/>
    <property type="evidence" value="ECO:0007669"/>
    <property type="project" value="Ensembl"/>
</dbReference>
<dbReference type="GO" id="GO:0072659">
    <property type="term" value="P:protein localization to plasma membrane"/>
    <property type="evidence" value="ECO:0007669"/>
    <property type="project" value="Ensembl"/>
</dbReference>
<dbReference type="GO" id="GO:0051453">
    <property type="term" value="P:regulation of intracellular pH"/>
    <property type="evidence" value="ECO:0000318"/>
    <property type="project" value="GO_Central"/>
</dbReference>
<dbReference type="GO" id="GO:0055085">
    <property type="term" value="P:transmembrane transport"/>
    <property type="evidence" value="ECO:0000318"/>
    <property type="project" value="GO_Central"/>
</dbReference>
<dbReference type="DisProt" id="DP01167"/>
<dbReference type="FunFam" id="1.10.287.570:FF:000001">
    <property type="entry name" value="Anion exchange protein"/>
    <property type="match status" value="1"/>
</dbReference>
<dbReference type="FunFam" id="3.40.930.10:FF:000015">
    <property type="entry name" value="Anion exchange protein"/>
    <property type="match status" value="1"/>
</dbReference>
<dbReference type="Gene3D" id="1.10.287.570">
    <property type="entry name" value="Helical hairpin bin"/>
    <property type="match status" value="1"/>
</dbReference>
<dbReference type="Gene3D" id="3.40.930.10">
    <property type="entry name" value="Mannitol-specific EII, Chain A"/>
    <property type="match status" value="1"/>
</dbReference>
<dbReference type="InterPro" id="IPR001717">
    <property type="entry name" value="Anion_exchange"/>
</dbReference>
<dbReference type="InterPro" id="IPR002977">
    <property type="entry name" value="Anion_exchange_1"/>
</dbReference>
<dbReference type="InterPro" id="IPR018241">
    <property type="entry name" value="Anion_exchange_CS"/>
</dbReference>
<dbReference type="InterPro" id="IPR013769">
    <property type="entry name" value="Band3_cytoplasmic_dom"/>
</dbReference>
<dbReference type="InterPro" id="IPR011531">
    <property type="entry name" value="HCO3_transpt-like_TM_dom"/>
</dbReference>
<dbReference type="InterPro" id="IPR003020">
    <property type="entry name" value="HCO3_transpt_euk"/>
</dbReference>
<dbReference type="InterPro" id="IPR016152">
    <property type="entry name" value="PTrfase/Anion_transptr"/>
</dbReference>
<dbReference type="NCBIfam" id="TIGR00834">
    <property type="entry name" value="ae"/>
    <property type="match status" value="1"/>
</dbReference>
<dbReference type="PANTHER" id="PTHR11453">
    <property type="entry name" value="ANION EXCHANGE PROTEIN"/>
    <property type="match status" value="1"/>
</dbReference>
<dbReference type="PANTHER" id="PTHR11453:SF12">
    <property type="entry name" value="BAND 3 ANION TRANSPORT PROTEIN"/>
    <property type="match status" value="1"/>
</dbReference>
<dbReference type="Pfam" id="PF07565">
    <property type="entry name" value="Band_3_cyto"/>
    <property type="match status" value="1"/>
</dbReference>
<dbReference type="Pfam" id="PF00955">
    <property type="entry name" value="HCO3_cotransp"/>
    <property type="match status" value="2"/>
</dbReference>
<dbReference type="PRINTS" id="PR00165">
    <property type="entry name" value="ANIONEXCHNGR"/>
</dbReference>
<dbReference type="PRINTS" id="PR01187">
    <property type="entry name" value="ANIONEXHNGR1"/>
</dbReference>
<dbReference type="PRINTS" id="PR01231">
    <property type="entry name" value="HCO3TRNSPORT"/>
</dbReference>
<dbReference type="SUPFAM" id="SSF55804">
    <property type="entry name" value="Phoshotransferase/anion transport protein"/>
    <property type="match status" value="1"/>
</dbReference>
<dbReference type="PROSITE" id="PS00219">
    <property type="entry name" value="ANION_EXCHANGER_1"/>
    <property type="match status" value="1"/>
</dbReference>
<dbReference type="PROSITE" id="PS00220">
    <property type="entry name" value="ANION_EXCHANGER_2"/>
    <property type="match status" value="1"/>
</dbReference>